<organism>
    <name type="scientific">Homo sapiens</name>
    <name type="common">Human</name>
    <dbReference type="NCBI Taxonomy" id="9606"/>
    <lineage>
        <taxon>Eukaryota</taxon>
        <taxon>Metazoa</taxon>
        <taxon>Chordata</taxon>
        <taxon>Craniata</taxon>
        <taxon>Vertebrata</taxon>
        <taxon>Euteleostomi</taxon>
        <taxon>Mammalia</taxon>
        <taxon>Eutheria</taxon>
        <taxon>Euarchontoglires</taxon>
        <taxon>Primates</taxon>
        <taxon>Haplorrhini</taxon>
        <taxon>Catarrhini</taxon>
        <taxon>Hominidae</taxon>
        <taxon>Homo</taxon>
    </lineage>
</organism>
<accession>Q13077</accession>
<accession>B4DJ77</accession>
<accession>Q658U1</accession>
<accession>Q8NF13</accession>
<comment type="function">
    <text evidence="5 13 14 16 17 19">Adapter molecule that regulates the activation of NF-kappa-B and JNK. Plays a role in the regulation of cell survival and apoptosis. The heterotrimer formed by TRAF1 and TRAF2 is part of a E3 ubiquitin-protein ligase complex that promotes ubiquitination of target proteins, such as MAP3K14. The TRAF1/TRAF2 complex recruits the antiapoptotic E3 protein-ubiquitin ligases BIRC2 and BIRC3 to TNFRSF1B/TNFR2.</text>
</comment>
<comment type="subunit">
    <text evidence="1 4 6 7 8 9 10 11 13 16 17 19 20 21 22 23 24 25 26 27 28 29">Homotrimer (PubMed:15383523, PubMed:20385093). Heterotrimer with TRAF2 (PubMed:19287455, PubMed:20385093, PubMed:8069916). Interacts with TNFRSF1A/TNFR1, TNFRSF1B/TNFR2, TNFRSF4, TNFRSF5/CD40, TNFRSF8/CD30, TNFRSF9/CD137, TNFRSF11A/RANK, TNFRSF13C, TNFRSF18/AITR, TNFRSF17/BCMA, TNFRSF19/TROY, TNFRSF19L/RELT, XEDAR, EDAR, Epstein-Barr virus BNFL1/LMP-1, TANK/ITRAF, TRAIP and RIPK2 (PubMed:10037686, PubMed:10809768, PubMed:10903733, PubMed:11035039, PubMed:11313261, PubMed:16323247, PubMed:19287455, PubMed:19698991, PubMed:8069916, PubMed:8627180, PubMed:8710854, PubMed:9418902, PubMed:9607925, PubMed:9642260, PubMed:9705938, PubMed:9718306, PubMed:9774460). Interacts with BIRC2 and BIRC3 N-terminus; a single BIRC2 or BIRC3 molecule interacts with a heterotrimer formed by TRAF1 and TRAF2 (PubMed:11907583, PubMed:20385093, PubMed:20447407). Interacts with NFATC2IP, TRAFD1 and with HIVEP3 (By similarity). Interacts with MAP3K14. Interacts with GPS2 (By similarity).</text>
</comment>
<comment type="interaction">
    <interactant intactId="EBI-359224">
        <id>Q13077</id>
    </interactant>
    <interactant intactId="EBI-2809489">
        <id>Q9NQ94</id>
        <label>A1CF</label>
    </interactant>
    <organismsDiffer>false</organismsDiffer>
    <experiments>6</experiments>
</comment>
<comment type="interaction">
    <interactant intactId="EBI-359224">
        <id>Q13077</id>
    </interactant>
    <interactant intactId="EBI-2880652">
        <id>Q08043</id>
        <label>ACTN3</label>
    </interactant>
    <organismsDiffer>false</organismsDiffer>
    <experiments>3</experiments>
</comment>
<comment type="interaction">
    <interactant intactId="EBI-359224">
        <id>Q13077</id>
    </interactant>
    <interactant intactId="EBI-8643161">
        <id>Q9NX04</id>
        <label>AIRIM</label>
    </interactant>
    <organismsDiffer>false</organismsDiffer>
    <experiments>6</experiments>
</comment>
<comment type="interaction">
    <interactant intactId="EBI-359224">
        <id>Q13077</id>
    </interactant>
    <interactant intactId="EBI-10222656">
        <id>Q02040-3</id>
        <label>AKAP17A</label>
    </interactant>
    <organismsDiffer>false</organismsDiffer>
    <experiments>3</experiments>
</comment>
<comment type="interaction">
    <interactant intactId="EBI-359224">
        <id>Q13077</id>
    </interactant>
    <interactant intactId="EBI-745213">
        <id>P29972</id>
        <label>AQP1</label>
    </interactant>
    <organismsDiffer>false</organismsDiffer>
    <experiments>3</experiments>
</comment>
<comment type="interaction">
    <interactant intactId="EBI-359224">
        <id>Q13077</id>
    </interactant>
    <interactant intactId="EBI-948603">
        <id>Q03989</id>
        <label>ARID5A</label>
    </interactant>
    <organismsDiffer>false</organismsDiffer>
    <experiments>3</experiments>
</comment>
<comment type="interaction">
    <interactant intactId="EBI-359224">
        <id>Q13077</id>
    </interactant>
    <interactant intactId="EBI-10266832">
        <id>Q8N5N6</id>
        <label>ARSJ</label>
    </interactant>
    <organismsDiffer>false</organismsDiffer>
    <experiments>3</experiments>
</comment>
<comment type="interaction">
    <interactant intactId="EBI-359224">
        <id>Q13077</id>
    </interactant>
    <interactant intactId="EBI-9977322">
        <id>A0AVN2</id>
        <label>BARD1</label>
    </interactant>
    <organismsDiffer>false</organismsDiffer>
    <experiments>3</experiments>
</comment>
<comment type="interaction">
    <interactant intactId="EBI-359224">
        <id>Q13077</id>
    </interactant>
    <interactant intactId="EBI-473181">
        <id>Q99728</id>
        <label>BARD1</label>
    </interactant>
    <organismsDiffer>false</organismsDiffer>
    <experiments>3</experiments>
</comment>
<comment type="interaction">
    <interactant intactId="EBI-359224">
        <id>Q13077</id>
    </interactant>
    <interactant intactId="EBI-765407">
        <id>P41182</id>
        <label>BCL6</label>
    </interactant>
    <organismsDiffer>false</organismsDiffer>
    <experiments>5</experiments>
</comment>
<comment type="interaction">
    <interactant intactId="EBI-359224">
        <id>Q13077</id>
    </interactant>
    <interactant intactId="EBI-745073">
        <id>Q9BXY8</id>
        <label>BEX2</label>
    </interactant>
    <organismsDiffer>false</organismsDiffer>
    <experiments>3</experiments>
</comment>
<comment type="interaction">
    <interactant intactId="EBI-359224">
        <id>Q13077</id>
    </interactant>
    <interactant intactId="EBI-514538">
        <id>Q13490</id>
        <label>BIRC2</label>
    </interactant>
    <organismsDiffer>false</organismsDiffer>
    <experiments>8</experiments>
</comment>
<comment type="interaction">
    <interactant intactId="EBI-359224">
        <id>Q13077</id>
    </interactant>
    <interactant intactId="EBI-747505">
        <id>Q8TAB5</id>
        <label>C1orf216</label>
    </interactant>
    <organismsDiffer>false</organismsDiffer>
    <experiments>6</experiments>
</comment>
<comment type="interaction">
    <interactant intactId="EBI-359224">
        <id>Q13077</id>
    </interactant>
    <interactant intactId="EBI-739879">
        <id>Q53TS8</id>
        <label>C2CD6</label>
    </interactant>
    <organismsDiffer>false</organismsDiffer>
    <experiments>3</experiments>
</comment>
<comment type="interaction">
    <interactant intactId="EBI-359224">
        <id>Q13077</id>
    </interactant>
    <interactant intactId="EBI-718719">
        <id>Q9Y2V2</id>
        <label>CARHSP1</label>
    </interactant>
    <organismsDiffer>false</organismsDiffer>
    <experiments>3</experiments>
</comment>
<comment type="interaction">
    <interactant intactId="EBI-359224">
        <id>Q13077</id>
    </interactant>
    <interactant intactId="EBI-744311">
        <id>Q8IYX3</id>
        <label>CCDC116</label>
    </interactant>
    <organismsDiffer>false</organismsDiffer>
    <experiments>6</experiments>
</comment>
<comment type="interaction">
    <interactant intactId="EBI-359224">
        <id>Q13077</id>
    </interactant>
    <interactant intactId="EBI-744556">
        <id>Q96HB5</id>
        <label>CCDC120</label>
    </interactant>
    <organismsDiffer>false</organismsDiffer>
    <experiments>3</experiments>
</comment>
<comment type="interaction">
    <interactant intactId="EBI-359224">
        <id>Q13077</id>
    </interactant>
    <interactant intactId="EBI-10185348">
        <id>Q96HB5-4</id>
        <label>CCDC120</label>
    </interactant>
    <organismsDiffer>false</organismsDiffer>
    <experiments>4</experiments>
</comment>
<comment type="interaction">
    <interactant intactId="EBI-359224">
        <id>Q13077</id>
    </interactant>
    <interactant intactId="EBI-10247802">
        <id>Q8IYE0-2</id>
        <label>CCDC146</label>
    </interactant>
    <organismsDiffer>false</organismsDiffer>
    <experiments>3</experiments>
</comment>
<comment type="interaction">
    <interactant intactId="EBI-359224">
        <id>Q13077</id>
    </interactant>
    <interactant intactId="EBI-740814">
        <id>Q8N715</id>
        <label>CCDC185</label>
    </interactant>
    <organismsDiffer>false</organismsDiffer>
    <experiments>3</experiments>
</comment>
<comment type="interaction">
    <interactant intactId="EBI-359224">
        <id>Q13077</id>
    </interactant>
    <interactant intactId="EBI-10238351">
        <id>Q9NVL8</id>
        <label>CCDC198</label>
    </interactant>
    <organismsDiffer>false</organismsDiffer>
    <experiments>3</experiments>
</comment>
<comment type="interaction">
    <interactant intactId="EBI-359224">
        <id>Q13077</id>
    </interactant>
    <interactant intactId="EBI-10175300">
        <id>Q8TD31-3</id>
        <label>CCHCR1</label>
    </interactant>
    <organismsDiffer>false</organismsDiffer>
    <experiments>6</experiments>
</comment>
<comment type="interaction">
    <interactant intactId="EBI-359224">
        <id>Q13077</id>
    </interactant>
    <interactant intactId="EBI-739534">
        <id>Q99618</id>
        <label>CDCA3</label>
    </interactant>
    <organismsDiffer>false</organismsDiffer>
    <experiments>6</experiments>
</comment>
<comment type="interaction">
    <interactant intactId="EBI-359224">
        <id>Q13077</id>
    </interactant>
    <interactant intactId="EBI-746238">
        <id>Q07002</id>
        <label>CDK18</label>
    </interactant>
    <organismsDiffer>false</organismsDiffer>
    <experiments>3</experiments>
</comment>
<comment type="interaction">
    <interactant intactId="EBI-359224">
        <id>Q13077</id>
    </interactant>
    <interactant intactId="EBI-375077">
        <id>P38936</id>
        <label>CDKN1A</label>
    </interactant>
    <organismsDiffer>false</organismsDiffer>
    <experiments>3</experiments>
</comment>
<comment type="interaction">
    <interactant intactId="EBI-359224">
        <id>Q13077</id>
    </interactant>
    <interactant intactId="EBI-711280">
        <id>P42772</id>
        <label>CDKN2B</label>
    </interactant>
    <organismsDiffer>false</organismsDiffer>
    <experiments>7</experiments>
</comment>
<comment type="interaction">
    <interactant intactId="EBI-359224">
        <id>Q13077</id>
    </interactant>
    <interactant intactId="EBI-514941">
        <id>O15519</id>
        <label>CFLAR</label>
    </interactant>
    <organismsDiffer>false</organismsDiffer>
    <experiments>6</experiments>
</comment>
<comment type="interaction">
    <interactant intactId="EBI-359224">
        <id>Q13077</id>
    </interactant>
    <interactant intactId="EBI-743375">
        <id>Q9NX63</id>
        <label>CHCHD3</label>
    </interactant>
    <organismsDiffer>false</organismsDiffer>
    <experiments>3</experiments>
</comment>
<comment type="interaction">
    <interactant intactId="EBI-359224">
        <id>Q13077</id>
    </interactant>
    <interactant intactId="EBI-1053725">
        <id>P10606</id>
        <label>COX5B</label>
    </interactant>
    <organismsDiffer>false</organismsDiffer>
    <experiments>3</experiments>
</comment>
<comment type="interaction">
    <interactant intactId="EBI-359224">
        <id>Q13077</id>
    </interactant>
    <interactant intactId="EBI-739773">
        <id>Q9BSW2</id>
        <label>CRACR2A</label>
    </interactant>
    <organismsDiffer>false</organismsDiffer>
    <experiments>3</experiments>
</comment>
<comment type="interaction">
    <interactant intactId="EBI-359224">
        <id>Q13077</id>
    </interactant>
    <interactant intactId="EBI-2212355">
        <id>Q49AN0</id>
        <label>CRY2</label>
    </interactant>
    <organismsDiffer>false</organismsDiffer>
    <experiments>3</experiments>
</comment>
<comment type="interaction">
    <interactant intactId="EBI-359224">
        <id>Q13077</id>
    </interactant>
    <interactant intactId="EBI-10239205">
        <id>Q24JT5</id>
        <label>CRYGA</label>
    </interactant>
    <organismsDiffer>false</organismsDiffer>
    <experiments>3</experiments>
</comment>
<comment type="interaction">
    <interactant intactId="EBI-359224">
        <id>Q13077</id>
    </interactant>
    <interactant intactId="EBI-744761">
        <id>Q6BCY4</id>
        <label>CYB5R2</label>
    </interactant>
    <organismsDiffer>false</organismsDiffer>
    <experiments>3</experiments>
</comment>
<comment type="interaction">
    <interactant intactId="EBI-359224">
        <id>Q13077</id>
    </interactant>
    <interactant intactId="EBI-2359040">
        <id>Q8TB45</id>
        <label>DEPTOR</label>
    </interactant>
    <organismsDiffer>false</organismsDiffer>
    <experiments>3</experiments>
</comment>
<comment type="interaction">
    <interactant intactId="EBI-359224">
        <id>Q13077</id>
    </interactant>
    <interactant intactId="EBI-9679045">
        <id>Q9NQL9</id>
        <label>DMRT3</label>
    </interactant>
    <organismsDiffer>false</organismsDiffer>
    <experiments>3</experiments>
</comment>
<comment type="interaction">
    <interactant intactId="EBI-359224">
        <id>Q13077</id>
    </interactant>
    <interactant intactId="EBI-2834978">
        <id>Q7L591</id>
        <label>DOK3</label>
    </interactant>
    <organismsDiffer>false</organismsDiffer>
    <experiments>4</experiments>
</comment>
<comment type="interaction">
    <interactant intactId="EBI-359224">
        <id>Q13077</id>
    </interactant>
    <interactant intactId="EBI-10694655">
        <id>Q7L591-3</id>
        <label>DOK3</label>
    </interactant>
    <organismsDiffer>false</organismsDiffer>
    <experiments>3</experiments>
</comment>
<comment type="interaction">
    <interactant intactId="EBI-359224">
        <id>Q13077</id>
    </interactant>
    <interactant intactId="EBI-749800">
        <id>Q9UII6</id>
        <label>DUSP13B</label>
    </interactant>
    <organismsDiffer>false</organismsDiffer>
    <experiments>3</experiments>
</comment>
<comment type="interaction">
    <interactant intactId="EBI-359224">
        <id>Q13077</id>
    </interactant>
    <interactant intactId="EBI-7357329">
        <id>Q9H596</id>
        <label>DUSP21</label>
    </interactant>
    <organismsDiffer>false</organismsDiffer>
    <experiments>3</experiments>
</comment>
<comment type="interaction">
    <interactant intactId="EBI-359224">
        <id>Q13077</id>
    </interactant>
    <interactant intactId="EBI-6591081">
        <id>Q13115</id>
        <label>DUSP4</label>
    </interactant>
    <organismsDiffer>false</organismsDiffer>
    <experiments>3</experiments>
</comment>
<comment type="interaction">
    <interactant intactId="EBI-359224">
        <id>Q13077</id>
    </interactant>
    <interactant intactId="EBI-12267154">
        <id>Q9HAK2</id>
        <label>EBF2</label>
    </interactant>
    <organismsDiffer>false</organismsDiffer>
    <experiments>3</experiments>
</comment>
<comment type="interaction">
    <interactant intactId="EBI-359224">
        <id>Q13077</id>
    </interactant>
    <interactant intactId="EBI-711968">
        <id>Q13011</id>
        <label>ECH1</label>
    </interactant>
    <organismsDiffer>false</organismsDiffer>
    <experiments>4</experiments>
</comment>
<comment type="interaction">
    <interactant intactId="EBI-359224">
        <id>Q13077</id>
    </interactant>
    <interactant intactId="EBI-2339219">
        <id>Q08426</id>
        <label>EHHADH</label>
    </interactant>
    <organismsDiffer>false</organismsDiffer>
    <experiments>3</experiments>
</comment>
<comment type="interaction">
    <interactant intactId="EBI-359224">
        <id>Q13077</id>
    </interactant>
    <interactant intactId="EBI-744099">
        <id>Q9H0I2</id>
        <label>ENKD1</label>
    </interactant>
    <organismsDiffer>false</organismsDiffer>
    <experiments>3</experiments>
</comment>
<comment type="interaction">
    <interactant intactId="EBI-359224">
        <id>Q13077</id>
    </interactant>
    <interactant intactId="EBI-739737">
        <id>Q01844</id>
        <label>EWSR1</label>
    </interactant>
    <organismsDiffer>false</organismsDiffer>
    <experiments>3</experiments>
</comment>
<comment type="interaction">
    <interactant intactId="EBI-359224">
        <id>Q13077</id>
    </interactant>
    <interactant intactId="EBI-719941">
        <id>Q3B820</id>
        <label>FAM161A</label>
    </interactant>
    <organismsDiffer>false</organismsDiffer>
    <experiments>5</experiments>
</comment>
<comment type="interaction">
    <interactant intactId="EBI-359224">
        <id>Q13077</id>
    </interactant>
    <interactant intactId="EBI-7225287">
        <id>Q96MY7</id>
        <label>FAM161B</label>
    </interactant>
    <organismsDiffer>false</organismsDiffer>
    <experiments>3</experiments>
</comment>
<comment type="interaction">
    <interactant intactId="EBI-359224">
        <id>Q13077</id>
    </interactant>
    <interactant intactId="EBI-751617">
        <id>Q9NVL1</id>
        <label>FAM86C1P</label>
    </interactant>
    <organismsDiffer>false</organismsDiffer>
    <experiments>3</experiments>
</comment>
<comment type="interaction">
    <interactant intactId="EBI-359224">
        <id>Q13077</id>
    </interactant>
    <interactant intactId="EBI-10244131">
        <id>Q8TES7-6</id>
        <label>FBF1</label>
    </interactant>
    <organismsDiffer>false</organismsDiffer>
    <experiments>3</experiments>
</comment>
<comment type="interaction">
    <interactant intactId="EBI-359224">
        <id>Q13077</id>
    </interactant>
    <interactant intactId="EBI-744419">
        <id>Q96D16</id>
        <label>FBXL18</label>
    </interactant>
    <organismsDiffer>false</organismsDiffer>
    <experiments>3</experiments>
</comment>
<comment type="interaction">
    <interactant intactId="EBI-359224">
        <id>Q13077</id>
    </interactant>
    <interactant intactId="EBI-3893419">
        <id>P15408</id>
        <label>FOSL2</label>
    </interactant>
    <organismsDiffer>false</organismsDiffer>
    <experiments>5</experiments>
</comment>
<comment type="interaction">
    <interactant intactId="EBI-359224">
        <id>Q13077</id>
    </interactant>
    <interactant intactId="EBI-372506">
        <id>Q8TAE8</id>
        <label>GADD45GIP1</label>
    </interactant>
    <organismsDiffer>false</organismsDiffer>
    <experiments>3</experiments>
</comment>
<comment type="interaction">
    <interactant intactId="EBI-359224">
        <id>Q13077</id>
    </interactant>
    <interactant intactId="EBI-9090198">
        <id>P15976-2</id>
        <label>GATA1</label>
    </interactant>
    <organismsDiffer>false</organismsDiffer>
    <experiments>3</experiments>
</comment>
<comment type="interaction">
    <interactant intactId="EBI-359224">
        <id>Q13077</id>
    </interactant>
    <interactant intactId="EBI-2806671">
        <id>P23769</id>
        <label>GATA2</label>
    </interactant>
    <organismsDiffer>false</organismsDiffer>
    <experiments>3</experiments>
</comment>
<comment type="interaction">
    <interactant intactId="EBI-359224">
        <id>Q13077</id>
    </interactant>
    <interactant intactId="EBI-923440">
        <id>Q8WXI9</id>
        <label>GATAD2B</label>
    </interactant>
    <organismsDiffer>false</organismsDiffer>
    <experiments>4</experiments>
</comment>
<comment type="interaction">
    <interactant intactId="EBI-359224">
        <id>Q13077</id>
    </interactant>
    <interactant intactId="EBI-947242">
        <id>P28676</id>
        <label>GCA</label>
    </interactant>
    <organismsDiffer>false</organismsDiffer>
    <experiments>3</experiments>
</comment>
<comment type="interaction">
    <interactant intactId="EBI-359224">
        <id>Q13077</id>
    </interactant>
    <interactant intactId="EBI-10188645">
        <id>O75603</id>
        <label>GCM2</label>
    </interactant>
    <organismsDiffer>false</organismsDiffer>
    <experiments>3</experiments>
</comment>
<comment type="interaction">
    <interactant intactId="EBI-359224">
        <id>Q13077</id>
    </interactant>
    <interactant intactId="EBI-744104">
        <id>P55040</id>
        <label>GEM</label>
    </interactant>
    <organismsDiffer>false</organismsDiffer>
    <experiments>6</experiments>
</comment>
<comment type="interaction">
    <interactant intactId="EBI-359224">
        <id>Q13077</id>
    </interactant>
    <interactant intactId="EBI-1046878">
        <id>Q14161</id>
        <label>GIT2</label>
    </interactant>
    <organismsDiffer>false</organismsDiffer>
    <experiments>2</experiments>
</comment>
<comment type="interaction">
    <interactant intactId="EBI-359224">
        <id>Q13077</id>
    </interactant>
    <interactant intactId="EBI-12232117">
        <id>Q8NEA6-2</id>
        <label>GLIS3</label>
    </interactant>
    <organismsDiffer>false</organismsDiffer>
    <experiments>3</experiments>
</comment>
<comment type="interaction">
    <interactant intactId="EBI-359224">
        <id>Q13077</id>
    </interactant>
    <interactant intactId="EBI-374781">
        <id>O76003</id>
        <label>GLRX3</label>
    </interactant>
    <organismsDiffer>false</organismsDiffer>
    <experiments>5</experiments>
</comment>
<comment type="interaction">
    <interactant intactId="EBI-359224">
        <id>Q13077</id>
    </interactant>
    <interactant intactId="EBI-745707">
        <id>Q8NEA9</id>
        <label>GMCL2</label>
    </interactant>
    <organismsDiffer>false</organismsDiffer>
    <experiments>3</experiments>
</comment>
<comment type="interaction">
    <interactant intactId="EBI-359224">
        <id>Q13077</id>
    </interactant>
    <interactant intactId="EBI-10220734">
        <id>P63218</id>
        <label>GNG5</label>
    </interactant>
    <organismsDiffer>false</organismsDiffer>
    <experiments>3</experiments>
</comment>
<comment type="interaction">
    <interactant intactId="EBI-359224">
        <id>Q13077</id>
    </interactant>
    <interactant intactId="EBI-739467">
        <id>Q9H8Y8</id>
        <label>GORASP2</label>
    </interactant>
    <organismsDiffer>false</organismsDiffer>
    <experiments>7</experiments>
</comment>
<comment type="interaction">
    <interactant intactId="EBI-359224">
        <id>Q13077</id>
    </interactant>
    <interactant intactId="EBI-2514791">
        <id>Q96CS2</id>
        <label>HAUS1</label>
    </interactant>
    <organismsDiffer>false</organismsDiffer>
    <experiments>3</experiments>
</comment>
<comment type="interaction">
    <interactant intactId="EBI-359224">
        <id>Q13077</id>
    </interactant>
    <interactant intactId="EBI-12057631">
        <id>A0A087WSW0</id>
        <label>HELT</label>
    </interactant>
    <organismsDiffer>false</organismsDiffer>
    <experiments>3</experiments>
</comment>
<comment type="interaction">
    <interactant intactId="EBI-359224">
        <id>Q13077</id>
    </interactant>
    <interactant intactId="EBI-750630">
        <id>Q9UBP5</id>
        <label>HEY2</label>
    </interactant>
    <organismsDiffer>false</organismsDiffer>
    <experiments>6</experiments>
</comment>
<comment type="interaction">
    <interactant intactId="EBI-359224">
        <id>Q13077</id>
    </interactant>
    <interactant intactId="EBI-740220">
        <id>O14964</id>
        <label>HGS</label>
    </interactant>
    <organismsDiffer>false</organismsDiffer>
    <experiments>3</experiments>
</comment>
<comment type="interaction">
    <interactant intactId="EBI-359224">
        <id>Q13077</id>
    </interactant>
    <interactant intactId="EBI-486809">
        <id>P52272</id>
        <label>HNRNPM</label>
    </interactant>
    <organismsDiffer>false</organismsDiffer>
    <experiments>3</experiments>
</comment>
<comment type="interaction">
    <interactant intactId="EBI-359224">
        <id>Q13077</id>
    </interactant>
    <interactant intactId="EBI-740785">
        <id>P49639</id>
        <label>HOXA1</label>
    </interactant>
    <organismsDiffer>false</organismsDiffer>
    <experiments>3</experiments>
</comment>
<comment type="interaction">
    <interactant intactId="EBI-359224">
        <id>Q13077</id>
    </interactant>
    <interactant intactId="EBI-3893317">
        <id>P09067</id>
        <label>HOXB5</label>
    </interactant>
    <organismsDiffer>false</organismsDiffer>
    <experiments>3</experiments>
</comment>
<comment type="interaction">
    <interactant intactId="EBI-359224">
        <id>Q13077</id>
    </interactant>
    <interactant intactId="EBI-1752118">
        <id>P31273</id>
        <label>HOXC8</label>
    </interactant>
    <organismsDiffer>false</organismsDiffer>
    <experiments>3</experiments>
</comment>
<comment type="interaction">
    <interactant intactId="EBI-359224">
        <id>Q13077</id>
    </interactant>
    <interactant intactId="EBI-10206752">
        <id>P35452</id>
        <label>HOXD12</label>
    </interactant>
    <organismsDiffer>false</organismsDiffer>
    <experiments>3</experiments>
</comment>
<comment type="interaction">
    <interactant intactId="EBI-359224">
        <id>Q13077</id>
    </interactant>
    <interactant intactId="EBI-2510602">
        <id>Q15040</id>
        <label>JOSD1</label>
    </interactant>
    <organismsDiffer>false</organismsDiffer>
    <experiments>3</experiments>
</comment>
<comment type="interaction">
    <interactant intactId="EBI-359224">
        <id>Q13077</id>
    </interactant>
    <interactant intactId="EBI-2556193">
        <id>Q63ZY3</id>
        <label>KANK2</label>
    </interactant>
    <organismsDiffer>false</organismsDiffer>
    <experiments>3</experiments>
</comment>
<comment type="interaction">
    <interactant intactId="EBI-359224">
        <id>Q13077</id>
    </interactant>
    <interactant intactId="EBI-10188326">
        <id>Q5T5P2-6</id>
        <label>KIAA1217</label>
    </interactant>
    <organismsDiffer>false</organismsDiffer>
    <experiments>3</experiments>
</comment>
<comment type="interaction">
    <interactant intactId="EBI-359224">
        <id>Q13077</id>
    </interactant>
    <interactant intactId="EBI-6426443">
        <id>Q2WGJ6</id>
        <label>KLHL38</label>
    </interactant>
    <organismsDiffer>false</organismsDiffer>
    <experiments>3</experiments>
</comment>
<comment type="interaction">
    <interactant intactId="EBI-359224">
        <id>Q13077</id>
    </interactant>
    <interactant intactId="EBI-2430095">
        <id>P12035</id>
        <label>KRT3</label>
    </interactant>
    <organismsDiffer>false</organismsDiffer>
    <experiments>3</experiments>
</comment>
<comment type="interaction">
    <interactant intactId="EBI-359224">
        <id>Q13077</id>
    </interactant>
    <interactant intactId="EBI-2949715">
        <id>O95678</id>
        <label>KRT75</label>
    </interactant>
    <organismsDiffer>false</organismsDiffer>
    <experiments>3</experiments>
</comment>
<comment type="interaction">
    <interactant intactId="EBI-359224">
        <id>Q13077</id>
    </interactant>
    <interactant intactId="EBI-10253976">
        <id>Q6PJG3</id>
        <label>LATS1</label>
    </interactant>
    <organismsDiffer>false</organismsDiffer>
    <experiments>3</experiments>
</comment>
<comment type="interaction">
    <interactant intactId="EBI-359224">
        <id>Q13077</id>
    </interactant>
    <interactant intactId="EBI-746045">
        <id>Q96JN0</id>
        <label>LCOR</label>
    </interactant>
    <organismsDiffer>false</organismsDiffer>
    <experiments>3</experiments>
</comment>
<comment type="interaction">
    <interactant intactId="EBI-359224">
        <id>Q13077</id>
    </interactant>
    <interactant intactId="EBI-10961483">
        <id>Q96JN0-2</id>
        <label>LCOR</label>
    </interactant>
    <organismsDiffer>false</organismsDiffer>
    <experiments>3</experiments>
</comment>
<comment type="interaction">
    <interactant intactId="EBI-359224">
        <id>Q13077</id>
    </interactant>
    <interactant intactId="EBI-748884">
        <id>Q96GY3</id>
        <label>LIN37</label>
    </interactant>
    <organismsDiffer>false</organismsDiffer>
    <experiments>3</experiments>
</comment>
<comment type="interaction">
    <interactant intactId="EBI-359224">
        <id>Q13077</id>
    </interactant>
    <interactant intactId="EBI-12028858">
        <id>Q8IXW0</id>
        <label>LMNTD2</label>
    </interactant>
    <organismsDiffer>false</organismsDiffer>
    <experiments>3</experiments>
</comment>
<comment type="interaction">
    <interactant intactId="EBI-359224">
        <id>Q13077</id>
    </interactant>
    <interactant intactId="EBI-739832">
        <id>Q8TBB1</id>
        <label>LNX1</label>
    </interactant>
    <organismsDiffer>false</organismsDiffer>
    <experiments>7</experiments>
</comment>
<comment type="interaction">
    <interactant intactId="EBI-359224">
        <id>Q13077</id>
    </interactant>
    <interactant intactId="EBI-12136157">
        <id>Q6UXK5</id>
        <label>LRRN1</label>
    </interactant>
    <organismsDiffer>false</organismsDiffer>
    <experiments>3</experiments>
</comment>
<comment type="interaction">
    <interactant intactId="EBI-359224">
        <id>Q13077</id>
    </interactant>
    <interactant intactId="EBI-2350695">
        <id>Q96GV9</id>
        <label>MACIR</label>
    </interactant>
    <organismsDiffer>false</organismsDiffer>
    <experiments>3</experiments>
</comment>
<comment type="interaction">
    <interactant intactId="EBI-359224">
        <id>Q13077</id>
    </interactant>
    <interactant intactId="EBI-739717">
        <id>Q15555</id>
        <label>MAPRE2</label>
    </interactant>
    <organismsDiffer>false</organismsDiffer>
    <experiments>9</experiments>
</comment>
<comment type="interaction">
    <interactant intactId="EBI-359224">
        <id>Q13077</id>
    </interactant>
    <interactant intactId="EBI-352602">
        <id>P43243</id>
        <label>MATR3</label>
    </interactant>
    <organismsDiffer>false</organismsDiffer>
    <experiments>3</experiments>
</comment>
<comment type="interaction">
    <interactant intactId="EBI-359224">
        <id>Q13077</id>
    </interactant>
    <interactant intactId="EBI-749353">
        <id>Q9H7H0</id>
        <label>METTL17</label>
    </interactant>
    <organismsDiffer>false</organismsDiffer>
    <experiments>7</experiments>
</comment>
<comment type="interaction">
    <interactant intactId="EBI-359224">
        <id>Q13077</id>
    </interactant>
    <interactant intactId="EBI-14086479">
        <id>Q8IVT4</id>
        <label>MGC50722</label>
    </interactant>
    <organismsDiffer>false</organismsDiffer>
    <experiments>3</experiments>
</comment>
<comment type="interaction">
    <interactant intactId="EBI-359224">
        <id>Q13077</id>
    </interactant>
    <interactant intactId="EBI-9675802">
        <id>Q6PF18</id>
        <label>MORN3</label>
    </interactant>
    <organismsDiffer>false</organismsDiffer>
    <experiments>8</experiments>
</comment>
<comment type="interaction">
    <interactant intactId="EBI-359224">
        <id>Q13077</id>
    </interactant>
    <interactant intactId="EBI-1757866">
        <id>P00540</id>
        <label>MOS</label>
    </interactant>
    <organismsDiffer>false</organismsDiffer>
    <experiments>6</experiments>
</comment>
<comment type="interaction">
    <interactant intactId="EBI-359224">
        <id>Q13077</id>
    </interactant>
    <interactant intactId="EBI-11991020">
        <id>A6NI15</id>
        <label>MSGN1</label>
    </interactant>
    <organismsDiffer>false</organismsDiffer>
    <experiments>3</experiments>
</comment>
<comment type="interaction">
    <interactant intactId="EBI-359224">
        <id>Q13077</id>
    </interactant>
    <interactant intactId="EBI-10318831">
        <id>Q9P2K5-2</id>
        <label>MYEF2</label>
    </interactant>
    <organismsDiffer>false</organismsDiffer>
    <experiments>3</experiments>
</comment>
<comment type="interaction">
    <interactant intactId="EBI-359224">
        <id>Q13077</id>
    </interactant>
    <interactant intactId="EBI-744402">
        <id>Q9NP98</id>
        <label>MYOZ1</label>
    </interactant>
    <organismsDiffer>false</organismsDiffer>
    <experiments>3</experiments>
</comment>
<comment type="interaction">
    <interactant intactId="EBI-359224">
        <id>Q13077</id>
    </interactant>
    <interactant intactId="EBI-2880203">
        <id>O76041</id>
        <label>NEBL</label>
    </interactant>
    <organismsDiffer>false</organismsDiffer>
    <experiments>4</experiments>
</comment>
<comment type="interaction">
    <interactant intactId="EBI-359224">
        <id>Q13077</id>
    </interactant>
    <interactant intactId="EBI-1210753">
        <id>Q7Z417</id>
        <label>NUFIP2</label>
    </interactant>
    <organismsDiffer>false</organismsDiffer>
    <experiments>3</experiments>
</comment>
<comment type="interaction">
    <interactant intactId="EBI-359224">
        <id>Q13077</id>
    </interactant>
    <interactant intactId="EBI-2811583">
        <id>Q9BVL2</id>
        <label>NUP58</label>
    </interactant>
    <organismsDiffer>false</organismsDiffer>
    <experiments>9</experiments>
</comment>
<comment type="interaction">
    <interactant intactId="EBI-359224">
        <id>Q13077</id>
    </interactant>
    <interactant intactId="EBI-10225049">
        <id>Q7RTU3</id>
        <label>OLIG3</label>
    </interactant>
    <organismsDiffer>false</organismsDiffer>
    <experiments>6</experiments>
</comment>
<comment type="interaction">
    <interactant intactId="EBI-359224">
        <id>Q13077</id>
    </interactant>
    <interactant intactId="EBI-11022007">
        <id>Q9HBE1-4</id>
        <label>PATZ1</label>
    </interactant>
    <organismsDiffer>false</organismsDiffer>
    <experiments>3</experiments>
</comment>
<comment type="interaction">
    <interactant intactId="EBI-359224">
        <id>Q13077</id>
    </interactant>
    <interactant intactId="EBI-10244393">
        <id>Q5JS98</id>
        <label>PBX3</label>
    </interactant>
    <organismsDiffer>false</organismsDiffer>
    <experiments>3</experiments>
</comment>
<comment type="interaction">
    <interactant intactId="EBI-359224">
        <id>Q13077</id>
    </interactant>
    <interactant intactId="EBI-741171">
        <id>Q96AL5</id>
        <label>PBX3</label>
    </interactant>
    <organismsDiffer>false</organismsDiffer>
    <experiments>3</experiments>
</comment>
<comment type="interaction">
    <interactant intactId="EBI-359224">
        <id>Q13077</id>
    </interactant>
    <interactant intactId="EBI-1642831">
        <id>Q08499</id>
        <label>PDE4D</label>
    </interactant>
    <organismsDiffer>false</organismsDiffer>
    <experiments>3</experiments>
</comment>
<comment type="interaction">
    <interactant intactId="EBI-359224">
        <id>Q13077</id>
    </interactant>
    <interactant intactId="EBI-745085">
        <id>Q96BD5</id>
        <label>PHF21A</label>
    </interactant>
    <organismsDiffer>false</organismsDiffer>
    <experiments>4</experiments>
</comment>
<comment type="interaction">
    <interactant intactId="EBI-359224">
        <id>Q13077</id>
    </interactant>
    <interactant intactId="EBI-714158">
        <id>Q13526</id>
        <label>PIN1</label>
    </interactant>
    <organismsDiffer>false</organismsDiffer>
    <experiments>3</experiments>
</comment>
<comment type="interaction">
    <interactant intactId="EBI-359224">
        <id>Q13077</id>
    </interactant>
    <interactant intactId="EBI-748265">
        <id>P78337</id>
        <label>PITX1</label>
    </interactant>
    <organismsDiffer>false</organismsDiffer>
    <experiments>3</experiments>
</comment>
<comment type="interaction">
    <interactant intactId="EBI-359224">
        <id>Q13077</id>
    </interactant>
    <interactant intactId="EBI-12138495">
        <id>Q99697-2</id>
        <label>PITX2</label>
    </interactant>
    <organismsDiffer>false</organismsDiffer>
    <experiments>3</experiments>
</comment>
<comment type="interaction">
    <interactant intactId="EBI-359224">
        <id>Q13077</id>
    </interactant>
    <interactant intactId="EBI-602382">
        <id>Q16512</id>
        <label>PKN1</label>
    </interactant>
    <organismsDiffer>false</organismsDiffer>
    <experiments>3</experiments>
</comment>
<comment type="interaction">
    <interactant intactId="EBI-359224">
        <id>Q13077</id>
    </interactant>
    <interactant intactId="EBI-10241513">
        <id>Q494U1</id>
        <label>PLEKHN1</label>
    </interactant>
    <organismsDiffer>false</organismsDiffer>
    <experiments>4</experiments>
</comment>
<comment type="interaction">
    <interactant intactId="EBI-359224">
        <id>Q13077</id>
    </interactant>
    <interactant intactId="EBI-12014286">
        <id>Q494U1-3</id>
        <label>PLEKHN1</label>
    </interactant>
    <organismsDiffer>false</organismsDiffer>
    <experiments>3</experiments>
</comment>
<comment type="interaction">
    <interactant intactId="EBI-359224">
        <id>Q13077</id>
    </interactant>
    <interactant intactId="EBI-10241319">
        <id>Q3SYA9</id>
        <label>POM121L1P</label>
    </interactant>
    <organismsDiffer>false</organismsDiffer>
    <experiments>3</experiments>
</comment>
<comment type="interaction">
    <interactant intactId="EBI-359224">
        <id>Q13077</id>
    </interactant>
    <interactant intactId="EBI-366525">
        <id>Q969H6</id>
        <label>POP5</label>
    </interactant>
    <organismsDiffer>false</organismsDiffer>
    <experiments>6</experiments>
</comment>
<comment type="interaction">
    <interactant intactId="EBI-359224">
        <id>Q13077</id>
    </interactant>
    <interactant intactId="EBI-1105153">
        <id>Q96KQ4</id>
        <label>PPP1R13B</label>
    </interactant>
    <organismsDiffer>false</organismsDiffer>
    <experiments>3</experiments>
</comment>
<comment type="interaction">
    <interactant intactId="EBI-359224">
        <id>Q13077</id>
    </interactant>
    <interactant intactId="EBI-10312471">
        <id>Q9NQW5</id>
        <label>PRDM7</label>
    </interactant>
    <organismsDiffer>false</organismsDiffer>
    <experiments>3</experiments>
</comment>
<comment type="interaction">
    <interactant intactId="EBI-359224">
        <id>Q13077</id>
    </interactant>
    <interactant intactId="EBI-359352">
        <id>P25786</id>
        <label>PSMA1</label>
    </interactant>
    <organismsDiffer>false</organismsDiffer>
    <experiments>3</experiments>
</comment>
<comment type="interaction">
    <interactant intactId="EBI-359224">
        <id>Q13077</id>
    </interactant>
    <interactant intactId="EBI-372273">
        <id>P20618</id>
        <label>PSMB1</label>
    </interactant>
    <organismsDiffer>false</organismsDiffer>
    <experiments>7</experiments>
</comment>
<comment type="interaction">
    <interactant intactId="EBI-359224">
        <id>Q13077</id>
    </interactant>
    <interactant intactId="EBI-2798044">
        <id>Q2TAL8</id>
        <label>QRICH1</label>
    </interactant>
    <organismsDiffer>false</organismsDiffer>
    <experiments>6</experiments>
</comment>
<comment type="interaction">
    <interactant intactId="EBI-359224">
        <id>Q13077</id>
    </interactant>
    <interactant intactId="EBI-359444">
        <id>Q9UJF2</id>
        <label>RASAL2</label>
    </interactant>
    <organismsDiffer>false</organismsDiffer>
    <experiments>3</experiments>
</comment>
<comment type="interaction">
    <interactant intactId="EBI-359224">
        <id>Q13077</id>
    </interactant>
    <interactant intactId="EBI-367390">
        <id>Q8WWW0</id>
        <label>RASSF5</label>
    </interactant>
    <organismsDiffer>false</organismsDiffer>
    <experiments>3</experiments>
</comment>
<comment type="interaction">
    <interactant intactId="EBI-359224">
        <id>Q13077</id>
    </interactant>
    <interactant intactId="EBI-740773">
        <id>Q96IZ5</id>
        <label>RBM41</label>
    </interactant>
    <organismsDiffer>false</organismsDiffer>
    <experiments>3</experiments>
</comment>
<comment type="interaction">
    <interactant intactId="EBI-359224">
        <id>Q13077</id>
    </interactant>
    <interactant intactId="EBI-2512147">
        <id>Q8IUH3</id>
        <label>RBM45</label>
    </interactant>
    <organismsDiffer>false</organismsDiffer>
    <experiments>3</experiments>
</comment>
<comment type="interaction">
    <interactant intactId="EBI-359224">
        <id>Q13077</id>
    </interactant>
    <interactant intactId="EBI-10964453">
        <id>Q8IUH3-3</id>
        <label>RBM45</label>
    </interactant>
    <organismsDiffer>false</organismsDiffer>
    <experiments>3</experiments>
</comment>
<comment type="interaction">
    <interactant intactId="EBI-359224">
        <id>Q13077</id>
    </interactant>
    <interactant intactId="EBI-1504830">
        <id>Q9P2K3-2</id>
        <label>RCOR3</label>
    </interactant>
    <organismsDiffer>false</organismsDiffer>
    <experiments>3</experiments>
</comment>
<comment type="interaction">
    <interactant intactId="EBI-359224">
        <id>Q13077</id>
    </interactant>
    <interactant intactId="EBI-358507">
        <id>Q13546</id>
        <label>RIPK1</label>
    </interactant>
    <organismsDiffer>false</organismsDiffer>
    <experiments>6</experiments>
</comment>
<comment type="interaction">
    <interactant intactId="EBI-359224">
        <id>Q13077</id>
    </interactant>
    <interactant intactId="EBI-12010512">
        <id>Q96MK2</id>
        <label>RIPOR3</label>
    </interactant>
    <organismsDiffer>false</organismsDiffer>
    <experiments>3</experiments>
</comment>
<comment type="interaction">
    <interactant intactId="EBI-359224">
        <id>Q13077</id>
    </interactant>
    <interactant intactId="EBI-10226430">
        <id>Q0D2K3</id>
        <label>RIPPLY1</label>
    </interactant>
    <organismsDiffer>false</organismsDiffer>
    <experiments>3</experiments>
</comment>
<comment type="interaction">
    <interactant intactId="EBI-359224">
        <id>Q13077</id>
    </interactant>
    <interactant intactId="EBI-10217913">
        <id>Q14D33</id>
        <label>RTP5</label>
    </interactant>
    <organismsDiffer>false</organismsDiffer>
    <experiments>3</experiments>
</comment>
<comment type="interaction">
    <interactant intactId="EBI-359224">
        <id>Q13077</id>
    </interactant>
    <interactant intactId="EBI-14067109">
        <id>Q96NU1</id>
        <label>SAMD11</label>
    </interactant>
    <organismsDiffer>false</organismsDiffer>
    <experiments>3</experiments>
</comment>
<comment type="interaction">
    <interactant intactId="EBI-359224">
        <id>Q13077</id>
    </interactant>
    <interactant intactId="EBI-12000762">
        <id>Q7Z5V6-2</id>
        <label>SAXO4</label>
    </interactant>
    <organismsDiffer>false</organismsDiffer>
    <experiments>3</experiments>
</comment>
<comment type="interaction">
    <interactant intactId="EBI-359224">
        <id>Q13077</id>
    </interactant>
    <interactant intactId="EBI-748391">
        <id>Q9BWG6</id>
        <label>SCNM1</label>
    </interactant>
    <organismsDiffer>false</organismsDiffer>
    <experiments>8</experiments>
</comment>
<comment type="interaction">
    <interactant intactId="EBI-359224">
        <id>Q13077</id>
    </interactant>
    <interactant intactId="EBI-79084">
        <id>Q92529</id>
        <label>SHC3</label>
    </interactant>
    <organismsDiffer>false</organismsDiffer>
    <experiments>3</experiments>
</comment>
<comment type="interaction">
    <interactant intactId="EBI-359224">
        <id>Q13077</id>
    </interactant>
    <interactant intactId="EBI-10313866">
        <id>Q9NUL5</id>
        <label>SHFL</label>
    </interactant>
    <organismsDiffer>false</organismsDiffer>
    <experiments>3</experiments>
</comment>
<comment type="interaction">
    <interactant intactId="EBI-359224">
        <id>Q13077</id>
    </interactant>
    <interactant intactId="EBI-11955083">
        <id>Q9NUL5-4</id>
        <label>SHFL</label>
    </interactant>
    <organismsDiffer>false</organismsDiffer>
    <experiments>3</experiments>
</comment>
<comment type="interaction">
    <interactant intactId="EBI-359224">
        <id>Q13077</id>
    </interactant>
    <interactant intactId="EBI-17172855">
        <id>Q9Y2K2-7</id>
        <label>SIK3</label>
    </interactant>
    <organismsDiffer>false</organismsDiffer>
    <experiments>3</experiments>
</comment>
<comment type="interaction">
    <interactant intactId="EBI-359224">
        <id>Q13077</id>
    </interactant>
    <interactant intactId="EBI-10255185">
        <id>Q6ZT89</id>
        <label>SLC25A48</label>
    </interactant>
    <organismsDiffer>false</organismsDiffer>
    <experiments>3</experiments>
</comment>
<comment type="interaction">
    <interactant intactId="EBI-359224">
        <id>Q13077</id>
    </interactant>
    <interactant intactId="EBI-356254">
        <id>P12236</id>
        <label>SLC25A6</label>
    </interactant>
    <organismsDiffer>false</organismsDiffer>
    <experiments>3</experiments>
</comment>
<comment type="interaction">
    <interactant intactId="EBI-359224">
        <id>Q13077</id>
    </interactant>
    <interactant intactId="EBI-9675976">
        <id>Q9BV90</id>
        <label>SNRNP25</label>
    </interactant>
    <organismsDiffer>false</organismsDiffer>
    <experiments>3</experiments>
</comment>
<comment type="interaction">
    <interactant intactId="EBI-359224">
        <id>Q13077</id>
    </interactant>
    <interactant intactId="EBI-632715">
        <id>Q13573</id>
        <label>SNW1</label>
    </interactant>
    <organismsDiffer>false</organismsDiffer>
    <experiments>3</experiments>
</comment>
<comment type="interaction">
    <interactant intactId="EBI-359224">
        <id>Q13077</id>
    </interactant>
    <interactant intactId="EBI-12288855">
        <id>Q5JUK2</id>
        <label>SOHLH1</label>
    </interactant>
    <organismsDiffer>false</organismsDiffer>
    <experiments>3</experiments>
</comment>
<comment type="interaction">
    <interactant intactId="EBI-359224">
        <id>Q13077</id>
    </interactant>
    <interactant intactId="EBI-750105">
        <id>Q5T0L3</id>
        <label>SPATA46</label>
    </interactant>
    <organismsDiffer>false</organismsDiffer>
    <experiments>3</experiments>
</comment>
<comment type="interaction">
    <interactant intactId="EBI-359224">
        <id>Q13077</id>
    </interactant>
    <interactant intactId="EBI-742688">
        <id>Q9NZD8</id>
        <label>SPG21</label>
    </interactant>
    <organismsDiffer>false</organismsDiffer>
    <experiments>6</experiments>
</comment>
<comment type="interaction">
    <interactant intactId="EBI-359224">
        <id>Q13077</id>
    </interactant>
    <interactant intactId="EBI-12020542">
        <id>Q96LM5</id>
        <label>SPMIP2</label>
    </interactant>
    <organismsDiffer>false</organismsDiffer>
    <experiments>3</experiments>
</comment>
<comment type="interaction">
    <interactant intactId="EBI-359224">
        <id>Q13077</id>
    </interactant>
    <interactant intactId="EBI-10172867">
        <id>A1L4H1</id>
        <label>SSC5D</label>
    </interactant>
    <organismsDiffer>false</organismsDiffer>
    <experiments>3</experiments>
</comment>
<comment type="interaction">
    <interactant intactId="EBI-359224">
        <id>Q13077</id>
    </interactant>
    <interactant intactId="EBI-992580">
        <id>Q13188</id>
        <label>STK3</label>
    </interactant>
    <organismsDiffer>false</organismsDiffer>
    <experiments>6</experiments>
</comment>
<comment type="interaction">
    <interactant intactId="EBI-359224">
        <id>Q13077</id>
    </interactant>
    <interactant intactId="EBI-6872807">
        <id>Q8N0S2</id>
        <label>SYCE1</label>
    </interactant>
    <organismsDiffer>false</organismsDiffer>
    <experiments>3</experiments>
</comment>
<comment type="interaction">
    <interactant intactId="EBI-359224">
        <id>Q13077</id>
    </interactant>
    <interactant intactId="EBI-356349">
        <id>Q92844</id>
        <label>TANK</label>
    </interactant>
    <organismsDiffer>false</organismsDiffer>
    <experiments>5</experiments>
</comment>
<comment type="interaction">
    <interactant intactId="EBI-359224">
        <id>Q13077</id>
    </interactant>
    <interactant intactId="EBI-10979580">
        <id>O95759</id>
        <label>TBC1D8</label>
    </interactant>
    <organismsDiffer>false</organismsDiffer>
    <experiments>3</experiments>
</comment>
<comment type="interaction">
    <interactant intactId="EBI-359224">
        <id>Q13077</id>
    </interactant>
    <interactant intactId="EBI-12085364">
        <id>O95935</id>
        <label>TBX18</label>
    </interactant>
    <organismsDiffer>false</organismsDiffer>
    <experiments>3</experiments>
</comment>
<comment type="interaction">
    <interactant intactId="EBI-359224">
        <id>Q13077</id>
    </interactant>
    <interactant intactId="EBI-710310">
        <id>Q15560</id>
        <label>TCEA2</label>
    </interactant>
    <organismsDiffer>false</organismsDiffer>
    <experiments>3</experiments>
</comment>
<comment type="interaction">
    <interactant intactId="EBI-359224">
        <id>Q13077</id>
    </interactant>
    <interactant intactId="EBI-11746252">
        <id>Q9NQB0-10</id>
        <label>TCF7L2</label>
    </interactant>
    <organismsDiffer>false</organismsDiffer>
    <experiments>3</experiments>
</comment>
<comment type="interaction">
    <interactant intactId="EBI-359224">
        <id>Q13077</id>
    </interactant>
    <interactant intactId="EBI-749995">
        <id>P56279</id>
        <label>TCL1A</label>
    </interactant>
    <organismsDiffer>false</organismsDiffer>
    <experiments>8</experiments>
</comment>
<comment type="interaction">
    <interactant intactId="EBI-359224">
        <id>Q13077</id>
    </interactant>
    <interactant intactId="EBI-10176734">
        <id>D3DUQ6</id>
        <label>TEAD4</label>
    </interactant>
    <organismsDiffer>false</organismsDiffer>
    <experiments>3</experiments>
</comment>
<comment type="interaction">
    <interactant intactId="EBI-359224">
        <id>Q13077</id>
    </interactant>
    <interactant intactId="EBI-747736">
        <id>Q15561</id>
        <label>TEAD4</label>
    </interactant>
    <organismsDiffer>false</organismsDiffer>
    <experiments>6</experiments>
</comment>
<comment type="interaction">
    <interactant intactId="EBI-359224">
        <id>Q13077</id>
    </interactant>
    <interactant intactId="EBI-11952651">
        <id>Q7Z6R9</id>
        <label>TFAP2D</label>
    </interactant>
    <organismsDiffer>false</organismsDiffer>
    <experiments>3</experiments>
</comment>
<comment type="interaction">
    <interactant intactId="EBI-359224">
        <id>Q13077</id>
    </interactant>
    <interactant intactId="EBI-2514218">
        <id>Q01664</id>
        <label>TFAP4</label>
    </interactant>
    <organismsDiffer>false</organismsDiffer>
    <experiments>6</experiments>
</comment>
<comment type="interaction">
    <interactant intactId="EBI-359224">
        <id>Q13077</id>
    </interactant>
    <interactant intactId="EBI-1245626">
        <id>P0C1Z6</id>
        <label>TFPT</label>
    </interactant>
    <organismsDiffer>false</organismsDiffer>
    <experiments>4</experiments>
</comment>
<comment type="interaction">
    <interactant intactId="EBI-359224">
        <id>Q13077</id>
    </interactant>
    <interactant intactId="EBI-741350">
        <id>Q9BT49</id>
        <label>THAP7</label>
    </interactant>
    <organismsDiffer>false</organismsDiffer>
    <experiments>6</experiments>
</comment>
<comment type="interaction">
    <interactant intactId="EBI-359224">
        <id>Q13077</id>
    </interactant>
    <interactant intactId="EBI-717810">
        <id>Q08117</id>
        <label>TLE5</label>
    </interactant>
    <organismsDiffer>false</organismsDiffer>
    <experiments>3</experiments>
</comment>
<comment type="interaction">
    <interactant intactId="EBI-359224">
        <id>Q13077</id>
    </interactant>
    <interactant intactId="EBI-11741437">
        <id>Q08117-2</id>
        <label>TLE5</label>
    </interactant>
    <organismsDiffer>false</organismsDiffer>
    <experiments>6</experiments>
</comment>
<comment type="interaction">
    <interactant intactId="EBI-359224">
        <id>Q13077</id>
    </interactant>
    <interactant intactId="EBI-359224">
        <id>Q13077</id>
        <label>TRAF1</label>
    </interactant>
    <organismsDiffer>false</organismsDiffer>
    <experiments>4</experiments>
</comment>
<comment type="interaction">
    <interactant intactId="EBI-359224">
        <id>Q13077</id>
    </interactant>
    <interactant intactId="EBI-355744">
        <id>Q12933</id>
        <label>TRAF2</label>
    </interactant>
    <organismsDiffer>false</organismsDiffer>
    <experiments>14</experiments>
</comment>
<comment type="interaction">
    <interactant intactId="EBI-359224">
        <id>Q13077</id>
    </interactant>
    <interactant intactId="EBI-359276">
        <id>Q9Y4K3</id>
        <label>TRAF6</label>
    </interactant>
    <organismsDiffer>false</organismsDiffer>
    <experiments>20</experiments>
</comment>
<comment type="interaction">
    <interactant intactId="EBI-359224">
        <id>Q13077</id>
    </interactant>
    <interactant intactId="EBI-740098">
        <id>P36406</id>
        <label>TRIM23</label>
    </interactant>
    <organismsDiffer>false</organismsDiffer>
    <experiments>3</experiments>
</comment>
<comment type="interaction">
    <interactant intactId="EBI-359224">
        <id>Q13077</id>
    </interactant>
    <interactant intactId="EBI-5235829">
        <id>Q8IWZ5</id>
        <label>TRIM42</label>
    </interactant>
    <organismsDiffer>false</organismsDiffer>
    <experiments>3</experiments>
</comment>
<comment type="interaction">
    <interactant intactId="EBI-359224">
        <id>Q13077</id>
    </interactant>
    <interactant intactId="EBI-10687282">
        <id>Q9NRE2</id>
        <label>TSHZ2</label>
    </interactant>
    <organismsDiffer>false</organismsDiffer>
    <experiments>3</experiments>
</comment>
<comment type="interaction">
    <interactant intactId="EBI-359224">
        <id>Q13077</id>
    </interactant>
    <interactant intactId="EBI-717229">
        <id>Q9Y5U2</id>
        <label>TSSC4</label>
    </interactant>
    <organismsDiffer>false</organismsDiffer>
    <experiments>3</experiments>
</comment>
<comment type="interaction">
    <interactant intactId="EBI-359224">
        <id>Q13077</id>
    </interactant>
    <interactant intactId="EBI-743272">
        <id>O75604</id>
        <label>USP2</label>
    </interactant>
    <organismsDiffer>false</organismsDiffer>
    <experiments>3</experiments>
</comment>
<comment type="interaction">
    <interactant intactId="EBI-359224">
        <id>Q13077</id>
    </interactant>
    <interactant intactId="EBI-11737646">
        <id>Q5TAP6</id>
        <label>UTP14C</label>
    </interactant>
    <organismsDiffer>false</organismsDiffer>
    <experiments>3</experiments>
</comment>
<comment type="interaction">
    <interactant intactId="EBI-359224">
        <id>Q13077</id>
    </interactant>
    <interactant intactId="EBI-11980193">
        <id>Q14119</id>
        <label>VEZF1</label>
    </interactant>
    <organismsDiffer>false</organismsDiffer>
    <experiments>3</experiments>
</comment>
<comment type="interaction">
    <interactant intactId="EBI-359224">
        <id>Q13077</id>
    </interactant>
    <interactant intactId="EBI-749118">
        <id>Q9BTA9</id>
        <label>WAC</label>
    </interactant>
    <organismsDiffer>false</organismsDiffer>
    <experiments>3</experiments>
</comment>
<comment type="interaction">
    <interactant intactId="EBI-359224">
        <id>Q13077</id>
    </interactant>
    <interactant intactId="EBI-711925">
        <id>Q05516</id>
        <label>ZBTB16</label>
    </interactant>
    <organismsDiffer>false</organismsDiffer>
    <experiments>5</experiments>
</comment>
<comment type="interaction">
    <interactant intactId="EBI-359224">
        <id>Q13077</id>
    </interactant>
    <interactant intactId="EBI-740767">
        <id>Q53FD0</id>
        <label>ZC2HC1C</label>
    </interactant>
    <organismsDiffer>false</organismsDiffer>
    <experiments>3</experiments>
</comment>
<comment type="interaction">
    <interactant intactId="EBI-359224">
        <id>Q13077</id>
    </interactant>
    <interactant intactId="EBI-750052">
        <id>Q9Y260</id>
        <label>ZFAB</label>
    </interactant>
    <organismsDiffer>false</organismsDiffer>
    <experiments>3</experiments>
</comment>
<comment type="interaction">
    <interactant intactId="EBI-359224">
        <id>Q13077</id>
    </interactant>
    <interactant intactId="EBI-2849569">
        <id>Q9BQ24</id>
        <label>ZFYVE21</label>
    </interactant>
    <organismsDiffer>false</organismsDiffer>
    <experiments>3</experiments>
</comment>
<comment type="interaction">
    <interactant intactId="EBI-359224">
        <id>Q13077</id>
    </interactant>
    <interactant intactId="EBI-8656416">
        <id>Q68DK2-5</id>
        <label>ZFYVE26</label>
    </interactant>
    <organismsDiffer>false</organismsDiffer>
    <experiments>3</experiments>
</comment>
<comment type="interaction">
    <interactant intactId="EBI-359224">
        <id>Q13077</id>
    </interactant>
    <interactant intactId="EBI-11963196">
        <id>Q15915</id>
        <label>ZIC1</label>
    </interactant>
    <organismsDiffer>false</organismsDiffer>
    <experiments>3</experiments>
</comment>
<comment type="interaction">
    <interactant intactId="EBI-359224">
        <id>Q13077</id>
    </interactant>
    <interactant intactId="EBI-2555767">
        <id>Q15973</id>
        <label>ZNF124</label>
    </interactant>
    <organismsDiffer>false</organismsDiffer>
    <experiments>6</experiments>
</comment>
<comment type="interaction">
    <interactant intactId="EBI-359224">
        <id>Q13077</id>
    </interactant>
    <interactant intactId="EBI-717634">
        <id>P17024</id>
        <label>ZNF20</label>
    </interactant>
    <organismsDiffer>false</organismsDiffer>
    <experiments>6</experiments>
</comment>
<comment type="interaction">
    <interactant intactId="EBI-359224">
        <id>Q13077</id>
    </interactant>
    <interactant intactId="EBI-5657766">
        <id>P17027</id>
        <label>ZNF23</label>
    </interactant>
    <organismsDiffer>false</organismsDiffer>
    <experiments>3</experiments>
</comment>
<comment type="interaction">
    <interactant intactId="EBI-359224">
        <id>Q13077</id>
    </interactant>
    <interactant intactId="EBI-740727">
        <id>Q8TAU3</id>
        <label>ZNF417</label>
    </interactant>
    <organismsDiffer>false</organismsDiffer>
    <experiments>3</experiments>
</comment>
<comment type="interaction">
    <interactant intactId="EBI-359224">
        <id>Q13077</id>
    </interactant>
    <interactant intactId="EBI-726439">
        <id>Q8IYI8</id>
        <label>ZNF440</label>
    </interactant>
    <organismsDiffer>false</organismsDiffer>
    <experiments>7</experiments>
</comment>
<comment type="interaction">
    <interactant intactId="EBI-359224">
        <id>Q13077</id>
    </interactant>
    <interactant intactId="EBI-1105370">
        <id>Q9ULM2</id>
        <label>ZNF490</label>
    </interactant>
    <organismsDiffer>false</organismsDiffer>
    <experiments>3</experiments>
</comment>
<comment type="interaction">
    <interactant intactId="EBI-359224">
        <id>Q13077</id>
    </interactant>
    <interactant intactId="EBI-10273699">
        <id>Q8TBZ5</id>
        <label>ZNF502</label>
    </interactant>
    <organismsDiffer>false</organismsDiffer>
    <experiments>7</experiments>
</comment>
<comment type="interaction">
    <interactant intactId="EBI-359224">
        <id>Q13077</id>
    </interactant>
    <interactant intactId="EBI-1049952">
        <id>Q96KM6</id>
        <label>ZNF512B</label>
    </interactant>
    <organismsDiffer>false</organismsDiffer>
    <experiments>7</experiments>
</comment>
<comment type="interaction">
    <interactant intactId="EBI-359224">
        <id>Q13077</id>
    </interactant>
    <interactant intactId="EBI-10273713">
        <id>Q8TBZ8</id>
        <label>ZNF564</label>
    </interactant>
    <organismsDiffer>false</organismsDiffer>
    <experiments>6</experiments>
</comment>
<comment type="interaction">
    <interactant intactId="EBI-359224">
        <id>Q13077</id>
    </interactant>
    <interactant intactId="EBI-10172590">
        <id>Q7Z3I7</id>
        <label>ZNF572</label>
    </interactant>
    <organismsDiffer>false</organismsDiffer>
    <experiments>6</experiments>
</comment>
<comment type="interaction">
    <interactant intactId="EBI-359224">
        <id>Q13077</id>
    </interactant>
    <interactant intactId="EBI-745520">
        <id>Q9P0T4</id>
        <label>ZNF581</label>
    </interactant>
    <organismsDiffer>false</organismsDiffer>
    <experiments>3</experiments>
</comment>
<comment type="interaction">
    <interactant intactId="EBI-359224">
        <id>Q13077</id>
    </interactant>
    <interactant intactId="EBI-6427977">
        <id>Q96SQ5</id>
        <label>ZNF587</label>
    </interactant>
    <organismsDiffer>false</organismsDiffer>
    <experiments>6</experiments>
</comment>
<comment type="interaction">
    <interactant intactId="EBI-359224">
        <id>Q13077</id>
    </interactant>
    <interactant intactId="EBI-2797561">
        <id>Q7L945</id>
        <label>ZNF627</label>
    </interactant>
    <organismsDiffer>false</organismsDiffer>
    <experiments>3</experiments>
</comment>
<comment type="interaction">
    <interactant intactId="EBI-359224">
        <id>Q13077</id>
    </interactant>
    <interactant intactId="EBI-11985915">
        <id>Q5T619</id>
        <label>ZNF648</label>
    </interactant>
    <organismsDiffer>false</organismsDiffer>
    <experiments>3</experiments>
</comment>
<comment type="interaction">
    <interactant intactId="EBI-359224">
        <id>Q13077</id>
    </interactant>
    <interactant intactId="EBI-10255155">
        <id>Q6ZS27-3</id>
        <label>ZNF662</label>
    </interactant>
    <organismsDiffer>false</organismsDiffer>
    <experiments>3</experiments>
</comment>
<comment type="interaction">
    <interactant intactId="EBI-359224">
        <id>Q13077</id>
    </interactant>
    <interactant intactId="EBI-12006574">
        <id>Q96BR6</id>
        <label>ZNF669</label>
    </interactant>
    <organismsDiffer>false</organismsDiffer>
    <experiments>3</experiments>
</comment>
<comment type="interaction">
    <interactant intactId="EBI-359224">
        <id>Q13077</id>
    </interactant>
    <interactant intactId="EBI-16429014">
        <id>A0A0S2Z5X4</id>
        <label>ZNF688</label>
    </interactant>
    <organismsDiffer>false</organismsDiffer>
    <experiments>3</experiments>
</comment>
<comment type="interaction">
    <interactant intactId="EBI-359224">
        <id>Q13077</id>
    </interactant>
    <interactant intactId="EBI-10225757">
        <id>Q08AG5</id>
        <label>ZNF844</label>
    </interactant>
    <organismsDiffer>false</organismsDiffer>
    <experiments>3</experiments>
</comment>
<comment type="interaction">
    <interactant intactId="EBI-359224">
        <id>Q13077</id>
    </interactant>
    <interactant intactId="EBI-10175581">
        <id>B2R8Y4</id>
    </interactant>
    <organismsDiffer>false</organismsDiffer>
    <experiments>3</experiments>
</comment>
<comment type="interaction">
    <interactant intactId="EBI-359224">
        <id>Q13077</id>
    </interactant>
    <interactant intactId="EBI-10248148">
        <id>Q5W150</id>
    </interactant>
    <organismsDiffer>false</organismsDiffer>
    <experiments>3</experiments>
</comment>
<comment type="interaction">
    <interactant intactId="EBI-359224">
        <id>Q13077</id>
    </interactant>
    <interactant intactId="EBI-750454">
        <id>Q96EJ4</id>
    </interactant>
    <organismsDiffer>false</organismsDiffer>
    <experiments>5</experiments>
</comment>
<comment type="interaction">
    <interactant intactId="EBI-359224">
        <id>Q13077</id>
    </interactant>
    <interactant intactId="EBI-10315054">
        <id>Q9NWL9</id>
    </interactant>
    <organismsDiffer>false</organismsDiffer>
    <experiments>3</experiments>
</comment>
<comment type="interaction">
    <interactant intactId="EBI-359224">
        <id>Q13077</id>
    </interactant>
    <interactant intactId="EBI-3957603">
        <id>P09022</id>
        <label>Hoxa1</label>
    </interactant>
    <organismsDiffer>true</organismsDiffer>
    <experiments>4</experiments>
</comment>
<comment type="interaction">
    <interactant intactId="EBI-359224">
        <id>Q13077</id>
    </interactant>
    <interactant intactId="EBI-25475920">
        <id>PRO_0000449631</id>
        <label>rep</label>
        <dbReference type="UniProtKB" id="P0DTD1"/>
    </interactant>
    <organismsDiffer>true</organismsDiffer>
    <experiments>3</experiments>
</comment>
<comment type="interaction">
    <interactant intactId="EBI-359224">
        <id>Q13077</id>
    </interactant>
    <interactant intactId="EBI-2842860">
        <id>P69974</id>
        <label>yscK</label>
    </interactant>
    <organismsDiffer>true</organismsDiffer>
    <experiments>2</experiments>
</comment>
<comment type="alternative products">
    <event type="alternative splicing"/>
    <isoform>
        <id>Q13077-1</id>
        <name>1</name>
        <sequence type="displayed"/>
    </isoform>
    <isoform>
        <id>Q13077-2</id>
        <name>2</name>
        <sequence type="described" ref="VSP_043092"/>
    </isoform>
</comment>
<comment type="domain">
    <text evidence="5">The coiled coil domain mediates homo- and hetero-oligomerization.</text>
</comment>
<comment type="domain">
    <text evidence="5">The MATH/TRAF domain binds to receptor cytoplasmic domains.</text>
</comment>
<comment type="domain">
    <text evidence="5">Cleavage by CASP8 liberates a C-terminal fragment that promotes apoptosis and inhibits the activation of NF-kappa-B in response to TNF signaling.</text>
</comment>
<comment type="PTM">
    <text evidence="1 12 18">Polyubiquitinated by BIRC2 and/or BIRC3, leading to its subsequent proteasomal degradation (PubMed:15468071, PubMed:19937093). Ubiquitinated by the SCF(FBXL2) complex, leading to its degradation by the proteasome (By similarity).</text>
</comment>
<comment type="caution">
    <text evidence="31">Lacks a RING domain and has therefore no E3 ubiquitin-protein ligase activity by itself.</text>
</comment>
<comment type="sequence caution" evidence="31">
    <conflict type="frameshift">
        <sequence resource="EMBL-CDS" id="BAC03449"/>
    </conflict>
</comment>
<name>TRAF1_HUMAN</name>
<dbReference type="EMBL" id="U19261">
    <property type="protein sequence ID" value="AAA62309.1"/>
    <property type="molecule type" value="mRNA"/>
</dbReference>
<dbReference type="EMBL" id="AK090468">
    <property type="protein sequence ID" value="BAC03449.1"/>
    <property type="status" value="ALT_FRAME"/>
    <property type="molecule type" value="mRNA"/>
</dbReference>
<dbReference type="EMBL" id="AK295959">
    <property type="protein sequence ID" value="BAG58739.1"/>
    <property type="molecule type" value="mRNA"/>
</dbReference>
<dbReference type="EMBL" id="AK315476">
    <property type="protein sequence ID" value="BAG37860.1"/>
    <property type="molecule type" value="mRNA"/>
</dbReference>
<dbReference type="EMBL" id="AL832989">
    <property type="protein sequence ID" value="CAH56343.1"/>
    <property type="molecule type" value="mRNA"/>
</dbReference>
<dbReference type="EMBL" id="BT019408">
    <property type="protein sequence ID" value="AAV38215.1"/>
    <property type="molecule type" value="mRNA"/>
</dbReference>
<dbReference type="EMBL" id="AC006430">
    <property type="status" value="NOT_ANNOTATED_CDS"/>
    <property type="molecule type" value="Genomic_DNA"/>
</dbReference>
<dbReference type="EMBL" id="CH471090">
    <property type="protein sequence ID" value="EAW87479.1"/>
    <property type="molecule type" value="Genomic_DNA"/>
</dbReference>
<dbReference type="EMBL" id="BC024145">
    <property type="protein sequence ID" value="AAH24145.1"/>
    <property type="molecule type" value="mRNA"/>
</dbReference>
<dbReference type="CCDS" id="CCDS55335.1">
    <molecule id="Q13077-2"/>
</dbReference>
<dbReference type="CCDS" id="CCDS6825.1">
    <molecule id="Q13077-1"/>
</dbReference>
<dbReference type="PIR" id="B55649">
    <property type="entry name" value="B55649"/>
</dbReference>
<dbReference type="RefSeq" id="NP_001177874.1">
    <molecule id="Q13077-1"/>
    <property type="nucleotide sequence ID" value="NM_001190945.2"/>
</dbReference>
<dbReference type="RefSeq" id="NP_001177876.1">
    <molecule id="Q13077-2"/>
    <property type="nucleotide sequence ID" value="NM_001190947.2"/>
</dbReference>
<dbReference type="RefSeq" id="NP_005649.1">
    <molecule id="Q13077-1"/>
    <property type="nucleotide sequence ID" value="NM_005658.5"/>
</dbReference>
<dbReference type="RefSeq" id="XP_054219687.1">
    <molecule id="Q13077-1"/>
    <property type="nucleotide sequence ID" value="XM_054363712.1"/>
</dbReference>
<dbReference type="RefSeq" id="XP_054219688.1">
    <molecule id="Q13077-1"/>
    <property type="nucleotide sequence ID" value="XM_054363713.1"/>
</dbReference>
<dbReference type="PDB" id="3M0D">
    <property type="method" value="X-ray"/>
    <property type="resolution" value="2.80 A"/>
    <property type="chains" value="C=181-244"/>
</dbReference>
<dbReference type="PDB" id="5E1T">
    <property type="method" value="X-ray"/>
    <property type="resolution" value="2.80 A"/>
    <property type="chains" value="A/B/C=220-416"/>
</dbReference>
<dbReference type="PDB" id="5H10">
    <property type="method" value="X-ray"/>
    <property type="resolution" value="3.21 A"/>
    <property type="chains" value="A/B/C=220-416"/>
</dbReference>
<dbReference type="PDBsum" id="3M0D"/>
<dbReference type="PDBsum" id="5E1T"/>
<dbReference type="PDBsum" id="5H10"/>
<dbReference type="SMR" id="Q13077"/>
<dbReference type="BioGRID" id="113037">
    <property type="interactions" value="304"/>
</dbReference>
<dbReference type="CORUM" id="Q13077"/>
<dbReference type="DIP" id="DIP-27514N"/>
<dbReference type="FunCoup" id="Q13077">
    <property type="interactions" value="534"/>
</dbReference>
<dbReference type="IntAct" id="Q13077">
    <property type="interactions" value="260"/>
</dbReference>
<dbReference type="MINT" id="Q13077"/>
<dbReference type="STRING" id="9606.ENSP00000362994"/>
<dbReference type="iPTMnet" id="Q13077"/>
<dbReference type="PhosphoSitePlus" id="Q13077"/>
<dbReference type="BioMuta" id="TRAF1"/>
<dbReference type="DMDM" id="6707734"/>
<dbReference type="jPOST" id="Q13077"/>
<dbReference type="MassIVE" id="Q13077"/>
<dbReference type="PaxDb" id="9606-ENSP00000362994"/>
<dbReference type="PeptideAtlas" id="Q13077"/>
<dbReference type="ProteomicsDB" id="59136">
    <molecule id="Q13077-1"/>
</dbReference>
<dbReference type="ProteomicsDB" id="59137">
    <molecule id="Q13077-2"/>
</dbReference>
<dbReference type="Pumba" id="Q13077"/>
<dbReference type="Antibodypedia" id="807">
    <property type="antibodies" value="389 antibodies from 40 providers"/>
</dbReference>
<dbReference type="DNASU" id="7185"/>
<dbReference type="Ensembl" id="ENST00000373887.8">
    <molecule id="Q13077-1"/>
    <property type="protein sequence ID" value="ENSP00000362994.3"/>
    <property type="gene ID" value="ENSG00000056558.11"/>
</dbReference>
<dbReference type="Ensembl" id="ENST00000540010.1">
    <molecule id="Q13077-1"/>
    <property type="protein sequence ID" value="ENSP00000443183.1"/>
    <property type="gene ID" value="ENSG00000056558.11"/>
</dbReference>
<dbReference type="Ensembl" id="ENST00000546084.5">
    <molecule id="Q13077-2"/>
    <property type="protein sequence ID" value="ENSP00000438583.1"/>
    <property type="gene ID" value="ENSG00000056558.11"/>
</dbReference>
<dbReference type="GeneID" id="7185"/>
<dbReference type="KEGG" id="hsa:7185"/>
<dbReference type="MANE-Select" id="ENST00000373887.8">
    <property type="protein sequence ID" value="ENSP00000362994.3"/>
    <property type="RefSeq nucleotide sequence ID" value="NM_005658.5"/>
    <property type="RefSeq protein sequence ID" value="NP_005649.1"/>
</dbReference>
<dbReference type="UCSC" id="uc004bku.3">
    <molecule id="Q13077-1"/>
    <property type="organism name" value="human"/>
</dbReference>
<dbReference type="AGR" id="HGNC:12031"/>
<dbReference type="CTD" id="7185"/>
<dbReference type="DisGeNET" id="7185"/>
<dbReference type="GeneCards" id="TRAF1"/>
<dbReference type="HGNC" id="HGNC:12031">
    <property type="gene designation" value="TRAF1"/>
</dbReference>
<dbReference type="HPA" id="ENSG00000056558">
    <property type="expression patterns" value="Tissue enhanced (lymphoid)"/>
</dbReference>
<dbReference type="MIM" id="601711">
    <property type="type" value="gene"/>
</dbReference>
<dbReference type="neXtProt" id="NX_Q13077"/>
<dbReference type="OpenTargets" id="ENSG00000056558"/>
<dbReference type="PharmGKB" id="PA36708"/>
<dbReference type="VEuPathDB" id="HostDB:ENSG00000056558"/>
<dbReference type="eggNOG" id="KOG0297">
    <property type="taxonomic scope" value="Eukaryota"/>
</dbReference>
<dbReference type="GeneTree" id="ENSGT00940000161076"/>
<dbReference type="HOGENOM" id="CLU_021061_0_0_1"/>
<dbReference type="InParanoid" id="Q13077"/>
<dbReference type="OMA" id="CIVETNA"/>
<dbReference type="OrthoDB" id="6499288at2759"/>
<dbReference type="PAN-GO" id="Q13077">
    <property type="GO annotations" value="9 GO annotations based on evolutionary models"/>
</dbReference>
<dbReference type="PhylomeDB" id="Q13077"/>
<dbReference type="TreeFam" id="TF321154"/>
<dbReference type="PathwayCommons" id="Q13077"/>
<dbReference type="Reactome" id="R-HSA-5357905">
    <property type="pathway name" value="Regulation of TNFR1 signaling"/>
</dbReference>
<dbReference type="Reactome" id="R-HSA-5357956">
    <property type="pathway name" value="TNFR1-induced NF-kappa-B signaling pathway"/>
</dbReference>
<dbReference type="SignaLink" id="Q13077"/>
<dbReference type="SIGNOR" id="Q13077"/>
<dbReference type="BioGRID-ORCS" id="7185">
    <property type="hits" value="9 hits in 1151 CRISPR screens"/>
</dbReference>
<dbReference type="ChiTaRS" id="TRAF1">
    <property type="organism name" value="human"/>
</dbReference>
<dbReference type="EvolutionaryTrace" id="Q13077"/>
<dbReference type="GeneWiki" id="TRAF1"/>
<dbReference type="GenomeRNAi" id="7185"/>
<dbReference type="Pharos" id="Q13077">
    <property type="development level" value="Tbio"/>
</dbReference>
<dbReference type="PRO" id="PR:Q13077"/>
<dbReference type="Proteomes" id="UP000005640">
    <property type="component" value="Chromosome 9"/>
</dbReference>
<dbReference type="RNAct" id="Q13077">
    <property type="molecule type" value="protein"/>
</dbReference>
<dbReference type="Bgee" id="ENSG00000056558">
    <property type="expression patterns" value="Expressed in granulocyte and 107 other cell types or tissues"/>
</dbReference>
<dbReference type="GO" id="GO:0005737">
    <property type="term" value="C:cytoplasm"/>
    <property type="evidence" value="ECO:0000318"/>
    <property type="project" value="GO_Central"/>
</dbReference>
<dbReference type="GO" id="GO:0005829">
    <property type="term" value="C:cytosol"/>
    <property type="evidence" value="ECO:0000304"/>
    <property type="project" value="Reactome"/>
</dbReference>
<dbReference type="GO" id="GO:0042802">
    <property type="term" value="F:identical protein binding"/>
    <property type="evidence" value="ECO:0000353"/>
    <property type="project" value="IntAct"/>
</dbReference>
<dbReference type="GO" id="GO:0035591">
    <property type="term" value="F:signaling adaptor activity"/>
    <property type="evidence" value="ECO:0000318"/>
    <property type="project" value="GO_Central"/>
</dbReference>
<dbReference type="GO" id="GO:0031996">
    <property type="term" value="F:thioesterase binding"/>
    <property type="evidence" value="ECO:0000353"/>
    <property type="project" value="UniProtKB"/>
</dbReference>
<dbReference type="GO" id="GO:0005164">
    <property type="term" value="F:tumor necrosis factor receptor binding"/>
    <property type="evidence" value="ECO:0000353"/>
    <property type="project" value="UniProtKB"/>
</dbReference>
<dbReference type="GO" id="GO:0031625">
    <property type="term" value="F:ubiquitin protein ligase binding"/>
    <property type="evidence" value="ECO:0000353"/>
    <property type="project" value="UniProtKB"/>
</dbReference>
<dbReference type="GO" id="GO:0008270">
    <property type="term" value="F:zinc ion binding"/>
    <property type="evidence" value="ECO:0007669"/>
    <property type="project" value="InterPro"/>
</dbReference>
<dbReference type="GO" id="GO:0006915">
    <property type="term" value="P:apoptotic process"/>
    <property type="evidence" value="ECO:0007669"/>
    <property type="project" value="UniProtKB-KW"/>
</dbReference>
<dbReference type="GO" id="GO:0051092">
    <property type="term" value="P:positive regulation of NF-kappaB transcription factor activity"/>
    <property type="evidence" value="ECO:0000314"/>
    <property type="project" value="UniProtKB"/>
</dbReference>
<dbReference type="GO" id="GO:0065003">
    <property type="term" value="P:protein-containing complex assembly"/>
    <property type="evidence" value="ECO:0000304"/>
    <property type="project" value="ProtInc"/>
</dbReference>
<dbReference type="GO" id="GO:0043122">
    <property type="term" value="P:regulation of canonical NF-kappaB signal transduction"/>
    <property type="evidence" value="ECO:0000318"/>
    <property type="project" value="GO_Central"/>
</dbReference>
<dbReference type="GO" id="GO:2001236">
    <property type="term" value="P:regulation of extrinsic apoptotic signaling pathway"/>
    <property type="evidence" value="ECO:0000314"/>
    <property type="project" value="UniProtKB"/>
</dbReference>
<dbReference type="GO" id="GO:0033209">
    <property type="term" value="P:tumor necrosis factor-mediated signaling pathway"/>
    <property type="evidence" value="ECO:0000318"/>
    <property type="project" value="GO_Central"/>
</dbReference>
<dbReference type="CDD" id="cd03779">
    <property type="entry name" value="MATH_TRAF1"/>
    <property type="match status" value="1"/>
</dbReference>
<dbReference type="FunFam" id="1.20.5.110:FF:000053">
    <property type="entry name" value="TNF receptor-associated factor"/>
    <property type="match status" value="1"/>
</dbReference>
<dbReference type="FunFam" id="2.60.210.10:FF:000001">
    <property type="entry name" value="TNF receptor-associated factor"/>
    <property type="match status" value="1"/>
</dbReference>
<dbReference type="Gene3D" id="1.20.5.110">
    <property type="match status" value="1"/>
</dbReference>
<dbReference type="Gene3D" id="2.60.210.10">
    <property type="entry name" value="Apoptosis, Tumor Necrosis Factor Receptor Associated Protein 2, Chain A"/>
    <property type="match status" value="1"/>
</dbReference>
<dbReference type="InterPro" id="IPR002083">
    <property type="entry name" value="MATH/TRAF_dom"/>
</dbReference>
<dbReference type="InterPro" id="IPR012227">
    <property type="entry name" value="TNF_rcpt-assoc_TRAF_met"/>
</dbReference>
<dbReference type="InterPro" id="IPR008974">
    <property type="entry name" value="TRAF-like"/>
</dbReference>
<dbReference type="InterPro" id="IPR049342">
    <property type="entry name" value="TRAF1-6_MATH_dom"/>
</dbReference>
<dbReference type="InterPro" id="IPR037306">
    <property type="entry name" value="TRAF1_MATH"/>
</dbReference>
<dbReference type="InterPro" id="IPR032070">
    <property type="entry name" value="TRAF_BIRC3-bd"/>
</dbReference>
<dbReference type="PANTHER" id="PTHR10131">
    <property type="entry name" value="TNF RECEPTOR ASSOCIATED FACTOR"/>
    <property type="match status" value="1"/>
</dbReference>
<dbReference type="PANTHER" id="PTHR10131:SF96">
    <property type="entry name" value="TNF RECEPTOR-ASSOCIATED FACTOR 1"/>
    <property type="match status" value="1"/>
</dbReference>
<dbReference type="Pfam" id="PF21355">
    <property type="entry name" value="TRAF-mep_MATH"/>
    <property type="match status" value="1"/>
</dbReference>
<dbReference type="Pfam" id="PF16673">
    <property type="entry name" value="TRAF_BIRC3_bd"/>
    <property type="match status" value="1"/>
</dbReference>
<dbReference type="PIRSF" id="PIRSF015614">
    <property type="entry name" value="TRAF"/>
    <property type="match status" value="1"/>
</dbReference>
<dbReference type="SMART" id="SM00061">
    <property type="entry name" value="MATH"/>
    <property type="match status" value="1"/>
</dbReference>
<dbReference type="SUPFAM" id="SSF49599">
    <property type="entry name" value="TRAF domain-like"/>
    <property type="match status" value="1"/>
</dbReference>
<dbReference type="PROSITE" id="PS50144">
    <property type="entry name" value="MATH"/>
    <property type="match status" value="1"/>
</dbReference>
<proteinExistence type="evidence at protein level"/>
<feature type="chain" id="PRO_0000056397" description="TNF receptor-associated factor 1">
    <location>
        <begin position="1"/>
        <end position="416"/>
    </location>
</feature>
<feature type="domain" description="MATH" evidence="2">
    <location>
        <begin position="266"/>
        <end position="412"/>
    </location>
</feature>
<feature type="region of interest" description="Disordered" evidence="3">
    <location>
        <begin position="1"/>
        <end position="24"/>
    </location>
</feature>
<feature type="coiled-coil region">
    <location>
        <begin position="182"/>
        <end position="264"/>
    </location>
</feature>
<feature type="site" description="Cleavage; by CASP8">
    <location>
        <begin position="163"/>
        <end position="164"/>
    </location>
</feature>
<feature type="modified residue" description="Phosphoserine" evidence="1">
    <location>
        <position position="146"/>
    </location>
</feature>
<feature type="cross-link" description="Glycyl lysine isopeptide (Lys-Gly) (interchain with G-Cter in ubiquitin)" evidence="12">
    <location>
        <position position="185"/>
    </location>
</feature>
<feature type="cross-link" description="Glycyl lysine isopeptide (Lys-Gly) (interchain with G-Cter in ubiquitin)" evidence="12">
    <location>
        <position position="193"/>
    </location>
</feature>
<feature type="splice variant" id="VSP_043092" description="In isoform 2." evidence="30">
    <location>
        <begin position="1"/>
        <end position="122"/>
    </location>
</feature>
<feature type="sequence variant" id="VAR_054161" description="In dbSNP:rs113495277." evidence="15">
    <original>M</original>
    <variation>T</variation>
    <location>
        <position position="139"/>
    </location>
</feature>
<feature type="mutagenesis site" description="Abolishes CASP8-mediated cleavage." evidence="5 13">
    <original>D</original>
    <variation>A</variation>
    <location>
        <position position="163"/>
    </location>
</feature>
<feature type="mutagenesis site" description="Nearly abolished ubiquitination; when associated with R-193." evidence="12">
    <original>K</original>
    <variation>R</variation>
    <location>
        <position position="185"/>
    </location>
</feature>
<feature type="mutagenesis site" description="Nearly abolished ubiquitination; when associated with R-185." evidence="12">
    <original>K</original>
    <variation>R</variation>
    <location>
        <position position="193"/>
    </location>
</feature>
<feature type="helix" evidence="32">
    <location>
        <begin position="183"/>
        <end position="241"/>
    </location>
</feature>
<feature type="strand" evidence="33">
    <location>
        <begin position="265"/>
        <end position="274"/>
    </location>
</feature>
<feature type="helix" evidence="33">
    <location>
        <begin position="276"/>
        <end position="283"/>
    </location>
</feature>
<feature type="turn" evidence="33">
    <location>
        <begin position="284"/>
        <end position="286"/>
    </location>
</feature>
<feature type="strand" evidence="33">
    <location>
        <begin position="290"/>
        <end position="292"/>
    </location>
</feature>
<feature type="strand" evidence="33">
    <location>
        <begin position="296"/>
        <end position="299"/>
    </location>
</feature>
<feature type="strand" evidence="33">
    <location>
        <begin position="304"/>
        <end position="310"/>
    </location>
</feature>
<feature type="helix" evidence="33">
    <location>
        <begin position="315"/>
        <end position="317"/>
    </location>
</feature>
<feature type="turn" evidence="33">
    <location>
        <begin position="318"/>
        <end position="320"/>
    </location>
</feature>
<feature type="strand" evidence="33">
    <location>
        <begin position="321"/>
        <end position="329"/>
    </location>
</feature>
<feature type="helix" evidence="33">
    <location>
        <begin position="334"/>
        <end position="336"/>
    </location>
</feature>
<feature type="strand" evidence="33">
    <location>
        <begin position="345"/>
        <end position="350"/>
    </location>
</feature>
<feature type="strand" evidence="33">
    <location>
        <begin position="352"/>
        <end position="355"/>
    </location>
</feature>
<feature type="strand" evidence="33">
    <location>
        <begin position="358"/>
        <end position="362"/>
    </location>
</feature>
<feature type="helix" evidence="34">
    <location>
        <begin position="369"/>
        <end position="371"/>
    </location>
</feature>
<feature type="strand" evidence="33">
    <location>
        <begin position="375"/>
        <end position="378"/>
    </location>
</feature>
<feature type="strand" evidence="33">
    <location>
        <begin position="382"/>
        <end position="389"/>
    </location>
</feature>
<feature type="helix" evidence="33">
    <location>
        <begin position="390"/>
        <end position="392"/>
    </location>
</feature>
<feature type="strand" evidence="34">
    <location>
        <begin position="396"/>
        <end position="398"/>
    </location>
</feature>
<feature type="strand" evidence="33">
    <location>
        <begin position="400"/>
        <end position="402"/>
    </location>
</feature>
<feature type="strand" evidence="33">
    <location>
        <begin position="405"/>
        <end position="412"/>
    </location>
</feature>
<evidence type="ECO:0000250" key="1">
    <source>
        <dbReference type="UniProtKB" id="P39428"/>
    </source>
</evidence>
<evidence type="ECO:0000255" key="2">
    <source>
        <dbReference type="PROSITE-ProRule" id="PRU00129"/>
    </source>
</evidence>
<evidence type="ECO:0000256" key="3">
    <source>
        <dbReference type="SAM" id="MobiDB-lite"/>
    </source>
</evidence>
<evidence type="ECO:0000269" key="4">
    <source>
    </source>
</evidence>
<evidence type="ECO:0000269" key="5">
    <source>
    </source>
</evidence>
<evidence type="ECO:0000269" key="6">
    <source>
    </source>
</evidence>
<evidence type="ECO:0000269" key="7">
    <source>
    </source>
</evidence>
<evidence type="ECO:0000269" key="8">
    <source>
    </source>
</evidence>
<evidence type="ECO:0000269" key="9">
    <source>
    </source>
</evidence>
<evidence type="ECO:0000269" key="10">
    <source>
    </source>
</evidence>
<evidence type="ECO:0000269" key="11">
    <source>
    </source>
</evidence>
<evidence type="ECO:0000269" key="12">
    <source>
    </source>
</evidence>
<evidence type="ECO:0000269" key="13">
    <source>
    </source>
</evidence>
<evidence type="ECO:0000269" key="14">
    <source>
    </source>
</evidence>
<evidence type="ECO:0000269" key="15">
    <source>
    </source>
</evidence>
<evidence type="ECO:0000269" key="16">
    <source>
    </source>
</evidence>
<evidence type="ECO:0000269" key="17">
    <source>
    </source>
</evidence>
<evidence type="ECO:0000269" key="18">
    <source>
    </source>
</evidence>
<evidence type="ECO:0000269" key="19">
    <source>
    </source>
</evidence>
<evidence type="ECO:0000269" key="20">
    <source>
    </source>
</evidence>
<evidence type="ECO:0000269" key="21">
    <source>
    </source>
</evidence>
<evidence type="ECO:0000269" key="22">
    <source>
    </source>
</evidence>
<evidence type="ECO:0000269" key="23">
    <source>
    </source>
</evidence>
<evidence type="ECO:0000269" key="24">
    <source>
    </source>
</evidence>
<evidence type="ECO:0000269" key="25">
    <source>
    </source>
</evidence>
<evidence type="ECO:0000269" key="26">
    <source>
    </source>
</evidence>
<evidence type="ECO:0000269" key="27">
    <source>
    </source>
</evidence>
<evidence type="ECO:0000269" key="28">
    <source>
    </source>
</evidence>
<evidence type="ECO:0000269" key="29">
    <source>
    </source>
</evidence>
<evidence type="ECO:0000303" key="30">
    <source>
    </source>
</evidence>
<evidence type="ECO:0000305" key="31"/>
<evidence type="ECO:0007829" key="32">
    <source>
        <dbReference type="PDB" id="3M0D"/>
    </source>
</evidence>
<evidence type="ECO:0007829" key="33">
    <source>
        <dbReference type="PDB" id="5E1T"/>
    </source>
</evidence>
<evidence type="ECO:0007829" key="34">
    <source>
        <dbReference type="PDB" id="5H10"/>
    </source>
</evidence>
<protein>
    <recommendedName>
        <fullName>TNF receptor-associated factor 1</fullName>
    </recommendedName>
    <alternativeName>
        <fullName>Epstein-Barr virus-induced protein 6</fullName>
    </alternativeName>
</protein>
<keyword id="KW-0002">3D-structure</keyword>
<keyword id="KW-0025">Alternative splicing</keyword>
<keyword id="KW-0053">Apoptosis</keyword>
<keyword id="KW-0175">Coiled coil</keyword>
<keyword id="KW-1017">Isopeptide bond</keyword>
<keyword id="KW-0597">Phosphoprotein</keyword>
<keyword id="KW-1267">Proteomics identification</keyword>
<keyword id="KW-1185">Reference proteome</keyword>
<keyword id="KW-0832">Ubl conjugation</keyword>
<sequence length="416" mass="46164">MASSSGSSPRPAPDENEFPFGCPPTVCQDPKEPRALCCAGCLSENPRNGEDQICPKCRGEDLQSISPGSRLRTQEKAHPEVAEAGIGCPFAGVGCSFKGSPQSVQEHEVTSQTSHLNLLLGFMKQWKARLGCGLESGPMALEQNLSDLQLQAAVEVAGDLEVDCYRAPCSESQEELALQHFMKEKLLAELEGKLRVFENIVAVLNKEVEASHLALATSIHQSQLDRERILSLEQRVVELQQTLAQKDQALGKLEQSLRLMEEASFDGTFLWKITNVTRRCHESACGRTVSLFSPAFYTAKYGYKLCLRLYLNGDGTGKRTHLSLFIVIMRGEYDALLPWPFRNKVTFMLLDQNNREHAIDAFRPDLSSASFQRPQSETNVASGCPLFFPLSKLQSPKHAYVKDDTMFLKCIVETST</sequence>
<gene>
    <name type="primary">TRAF1</name>
    <name type="synonym">EBI6</name>
</gene>
<reference key="1">
    <citation type="journal article" date="1995" name="Cell">
        <title>The Epstein-Barr virus transforming protein LMP1 engages signaling proteins for the tumor necrosis factor receptor family.</title>
        <authorList>
            <person name="Mosialos G."/>
            <person name="Birkenbach M."/>
            <person name="Yalamanchili R."/>
            <person name="VanArsdale T."/>
            <person name="Ware C."/>
            <person name="Kieff E."/>
        </authorList>
    </citation>
    <scope>NUCLEOTIDE SEQUENCE [MRNA] (ISOFORM 1)</scope>
    <source>
        <tissue>Lymphoma</tissue>
    </source>
</reference>
<reference key="2">
    <citation type="journal article" date="2004" name="Nat. Genet.">
        <title>Complete sequencing and characterization of 21,243 full-length human cDNAs.</title>
        <authorList>
            <person name="Ota T."/>
            <person name="Suzuki Y."/>
            <person name="Nishikawa T."/>
            <person name="Otsuki T."/>
            <person name="Sugiyama T."/>
            <person name="Irie R."/>
            <person name="Wakamatsu A."/>
            <person name="Hayashi K."/>
            <person name="Sato H."/>
            <person name="Nagai K."/>
            <person name="Kimura K."/>
            <person name="Makita H."/>
            <person name="Sekine M."/>
            <person name="Obayashi M."/>
            <person name="Nishi T."/>
            <person name="Shibahara T."/>
            <person name="Tanaka T."/>
            <person name="Ishii S."/>
            <person name="Yamamoto J."/>
            <person name="Saito K."/>
            <person name="Kawai Y."/>
            <person name="Isono Y."/>
            <person name="Nakamura Y."/>
            <person name="Nagahari K."/>
            <person name="Murakami K."/>
            <person name="Yasuda T."/>
            <person name="Iwayanagi T."/>
            <person name="Wagatsuma M."/>
            <person name="Shiratori A."/>
            <person name="Sudo H."/>
            <person name="Hosoiri T."/>
            <person name="Kaku Y."/>
            <person name="Kodaira H."/>
            <person name="Kondo H."/>
            <person name="Sugawara M."/>
            <person name="Takahashi M."/>
            <person name="Kanda K."/>
            <person name="Yokoi T."/>
            <person name="Furuya T."/>
            <person name="Kikkawa E."/>
            <person name="Omura Y."/>
            <person name="Abe K."/>
            <person name="Kamihara K."/>
            <person name="Katsuta N."/>
            <person name="Sato K."/>
            <person name="Tanikawa M."/>
            <person name="Yamazaki M."/>
            <person name="Ninomiya K."/>
            <person name="Ishibashi T."/>
            <person name="Yamashita H."/>
            <person name="Murakawa K."/>
            <person name="Fujimori K."/>
            <person name="Tanai H."/>
            <person name="Kimata M."/>
            <person name="Watanabe M."/>
            <person name="Hiraoka S."/>
            <person name="Chiba Y."/>
            <person name="Ishida S."/>
            <person name="Ono Y."/>
            <person name="Takiguchi S."/>
            <person name="Watanabe S."/>
            <person name="Yosida M."/>
            <person name="Hotuta T."/>
            <person name="Kusano J."/>
            <person name="Kanehori K."/>
            <person name="Takahashi-Fujii A."/>
            <person name="Hara H."/>
            <person name="Tanase T.-O."/>
            <person name="Nomura Y."/>
            <person name="Togiya S."/>
            <person name="Komai F."/>
            <person name="Hara R."/>
            <person name="Takeuchi K."/>
            <person name="Arita M."/>
            <person name="Imose N."/>
            <person name="Musashino K."/>
            <person name="Yuuki H."/>
            <person name="Oshima A."/>
            <person name="Sasaki N."/>
            <person name="Aotsuka S."/>
            <person name="Yoshikawa Y."/>
            <person name="Matsunawa H."/>
            <person name="Ichihara T."/>
            <person name="Shiohata N."/>
            <person name="Sano S."/>
            <person name="Moriya S."/>
            <person name="Momiyama H."/>
            <person name="Satoh N."/>
            <person name="Takami S."/>
            <person name="Terashima Y."/>
            <person name="Suzuki O."/>
            <person name="Nakagawa S."/>
            <person name="Senoh A."/>
            <person name="Mizoguchi H."/>
            <person name="Goto Y."/>
            <person name="Shimizu F."/>
            <person name="Wakebe H."/>
            <person name="Hishigaki H."/>
            <person name="Watanabe T."/>
            <person name="Sugiyama A."/>
            <person name="Takemoto M."/>
            <person name="Kawakami B."/>
            <person name="Yamazaki M."/>
            <person name="Watanabe K."/>
            <person name="Kumagai A."/>
            <person name="Itakura S."/>
            <person name="Fukuzumi Y."/>
            <person name="Fujimori Y."/>
            <person name="Komiyama M."/>
            <person name="Tashiro H."/>
            <person name="Tanigami A."/>
            <person name="Fujiwara T."/>
            <person name="Ono T."/>
            <person name="Yamada K."/>
            <person name="Fujii Y."/>
            <person name="Ozaki K."/>
            <person name="Hirao M."/>
            <person name="Ohmori Y."/>
            <person name="Kawabata A."/>
            <person name="Hikiji T."/>
            <person name="Kobatake N."/>
            <person name="Inagaki H."/>
            <person name="Ikema Y."/>
            <person name="Okamoto S."/>
            <person name="Okitani R."/>
            <person name="Kawakami T."/>
            <person name="Noguchi S."/>
            <person name="Itoh T."/>
            <person name="Shigeta K."/>
            <person name="Senba T."/>
            <person name="Matsumura K."/>
            <person name="Nakajima Y."/>
            <person name="Mizuno T."/>
            <person name="Morinaga M."/>
            <person name="Sasaki M."/>
            <person name="Togashi T."/>
            <person name="Oyama M."/>
            <person name="Hata H."/>
            <person name="Watanabe M."/>
            <person name="Komatsu T."/>
            <person name="Mizushima-Sugano J."/>
            <person name="Satoh T."/>
            <person name="Shirai Y."/>
            <person name="Takahashi Y."/>
            <person name="Nakagawa K."/>
            <person name="Okumura K."/>
            <person name="Nagase T."/>
            <person name="Nomura N."/>
            <person name="Kikuchi H."/>
            <person name="Masuho Y."/>
            <person name="Yamashita R."/>
            <person name="Nakai K."/>
            <person name="Yada T."/>
            <person name="Nakamura Y."/>
            <person name="Ohara O."/>
            <person name="Isogai T."/>
            <person name="Sugano S."/>
        </authorList>
    </citation>
    <scope>NUCLEOTIDE SEQUENCE [LARGE SCALE MRNA] (ISOFORMS 1 AND 2)</scope>
    <source>
        <tissue>Spleen</tissue>
        <tissue>Substantia nigra</tissue>
    </source>
</reference>
<reference key="3">
    <citation type="journal article" date="2007" name="BMC Genomics">
        <title>The full-ORF clone resource of the German cDNA consortium.</title>
        <authorList>
            <person name="Bechtel S."/>
            <person name="Rosenfelder H."/>
            <person name="Duda A."/>
            <person name="Schmidt C.P."/>
            <person name="Ernst U."/>
            <person name="Wellenreuther R."/>
            <person name="Mehrle A."/>
            <person name="Schuster C."/>
            <person name="Bahr A."/>
            <person name="Bloecker H."/>
            <person name="Heubner D."/>
            <person name="Hoerlein A."/>
            <person name="Michel G."/>
            <person name="Wedler H."/>
            <person name="Koehrer K."/>
            <person name="Ottenwaelder B."/>
            <person name="Poustka A."/>
            <person name="Wiemann S."/>
            <person name="Schupp I."/>
        </authorList>
    </citation>
    <scope>NUCLEOTIDE SEQUENCE [LARGE SCALE MRNA] (ISOFORM 1)</scope>
    <source>
        <tissue>Stomach</tissue>
    </source>
</reference>
<reference key="4">
    <citation type="submission" date="2003-05" db="EMBL/GenBank/DDBJ databases">
        <title>Cloning of human full-length CDSs in BD Creator(TM) system donor vector.</title>
        <authorList>
            <person name="Kalnine N."/>
            <person name="Chen X."/>
            <person name="Rolfs A."/>
            <person name="Halleck A."/>
            <person name="Hines L."/>
            <person name="Eisenstein S."/>
            <person name="Koundinya M."/>
            <person name="Raphael J."/>
            <person name="Moreira D."/>
            <person name="Kelley T."/>
            <person name="LaBaer J."/>
            <person name="Lin Y."/>
            <person name="Phelan M."/>
            <person name="Farmer A."/>
        </authorList>
    </citation>
    <scope>NUCLEOTIDE SEQUENCE [LARGE SCALE MRNA] (ISOFORM 1)</scope>
</reference>
<reference key="5">
    <citation type="journal article" date="2004" name="Nature">
        <title>DNA sequence and analysis of human chromosome 9.</title>
        <authorList>
            <person name="Humphray S.J."/>
            <person name="Oliver K."/>
            <person name="Hunt A.R."/>
            <person name="Plumb R.W."/>
            <person name="Loveland J.E."/>
            <person name="Howe K.L."/>
            <person name="Andrews T.D."/>
            <person name="Searle S."/>
            <person name="Hunt S.E."/>
            <person name="Scott C.E."/>
            <person name="Jones M.C."/>
            <person name="Ainscough R."/>
            <person name="Almeida J.P."/>
            <person name="Ambrose K.D."/>
            <person name="Ashwell R.I.S."/>
            <person name="Babbage A.K."/>
            <person name="Babbage S."/>
            <person name="Bagguley C.L."/>
            <person name="Bailey J."/>
            <person name="Banerjee R."/>
            <person name="Barker D.J."/>
            <person name="Barlow K.F."/>
            <person name="Bates K."/>
            <person name="Beasley H."/>
            <person name="Beasley O."/>
            <person name="Bird C.P."/>
            <person name="Bray-Allen S."/>
            <person name="Brown A.J."/>
            <person name="Brown J.Y."/>
            <person name="Burford D."/>
            <person name="Burrill W."/>
            <person name="Burton J."/>
            <person name="Carder C."/>
            <person name="Carter N.P."/>
            <person name="Chapman J.C."/>
            <person name="Chen Y."/>
            <person name="Clarke G."/>
            <person name="Clark S.Y."/>
            <person name="Clee C.M."/>
            <person name="Clegg S."/>
            <person name="Collier R.E."/>
            <person name="Corby N."/>
            <person name="Crosier M."/>
            <person name="Cummings A.T."/>
            <person name="Davies J."/>
            <person name="Dhami P."/>
            <person name="Dunn M."/>
            <person name="Dutta I."/>
            <person name="Dyer L.W."/>
            <person name="Earthrowl M.E."/>
            <person name="Faulkner L."/>
            <person name="Fleming C.J."/>
            <person name="Frankish A."/>
            <person name="Frankland J.A."/>
            <person name="French L."/>
            <person name="Fricker D.G."/>
            <person name="Garner P."/>
            <person name="Garnett J."/>
            <person name="Ghori J."/>
            <person name="Gilbert J.G.R."/>
            <person name="Glison C."/>
            <person name="Grafham D.V."/>
            <person name="Gribble S."/>
            <person name="Griffiths C."/>
            <person name="Griffiths-Jones S."/>
            <person name="Grocock R."/>
            <person name="Guy J."/>
            <person name="Hall R.E."/>
            <person name="Hammond S."/>
            <person name="Harley J.L."/>
            <person name="Harrison E.S.I."/>
            <person name="Hart E.A."/>
            <person name="Heath P.D."/>
            <person name="Henderson C.D."/>
            <person name="Hopkins B.L."/>
            <person name="Howard P.J."/>
            <person name="Howden P.J."/>
            <person name="Huckle E."/>
            <person name="Johnson C."/>
            <person name="Johnson D."/>
            <person name="Joy A.A."/>
            <person name="Kay M."/>
            <person name="Keenan S."/>
            <person name="Kershaw J.K."/>
            <person name="Kimberley A.M."/>
            <person name="King A."/>
            <person name="Knights A."/>
            <person name="Laird G.K."/>
            <person name="Langford C."/>
            <person name="Lawlor S."/>
            <person name="Leongamornlert D.A."/>
            <person name="Leversha M."/>
            <person name="Lloyd C."/>
            <person name="Lloyd D.M."/>
            <person name="Lovell J."/>
            <person name="Martin S."/>
            <person name="Mashreghi-Mohammadi M."/>
            <person name="Matthews L."/>
            <person name="McLaren S."/>
            <person name="McLay K.E."/>
            <person name="McMurray A."/>
            <person name="Milne S."/>
            <person name="Nickerson T."/>
            <person name="Nisbett J."/>
            <person name="Nordsiek G."/>
            <person name="Pearce A.V."/>
            <person name="Peck A.I."/>
            <person name="Porter K.M."/>
            <person name="Pandian R."/>
            <person name="Pelan S."/>
            <person name="Phillimore B."/>
            <person name="Povey S."/>
            <person name="Ramsey Y."/>
            <person name="Rand V."/>
            <person name="Scharfe M."/>
            <person name="Sehra H.K."/>
            <person name="Shownkeen R."/>
            <person name="Sims S.K."/>
            <person name="Skuce C.D."/>
            <person name="Smith M."/>
            <person name="Steward C.A."/>
            <person name="Swarbreck D."/>
            <person name="Sycamore N."/>
            <person name="Tester J."/>
            <person name="Thorpe A."/>
            <person name="Tracey A."/>
            <person name="Tromans A."/>
            <person name="Thomas D.W."/>
            <person name="Wall M."/>
            <person name="Wallis J.M."/>
            <person name="West A.P."/>
            <person name="Whitehead S.L."/>
            <person name="Willey D.L."/>
            <person name="Williams S.A."/>
            <person name="Wilming L."/>
            <person name="Wray P.W."/>
            <person name="Young L."/>
            <person name="Ashurst J.L."/>
            <person name="Coulson A."/>
            <person name="Blocker H."/>
            <person name="Durbin R.M."/>
            <person name="Sulston J.E."/>
            <person name="Hubbard T."/>
            <person name="Jackson M.J."/>
            <person name="Bentley D.R."/>
            <person name="Beck S."/>
            <person name="Rogers J."/>
            <person name="Dunham I."/>
        </authorList>
    </citation>
    <scope>NUCLEOTIDE SEQUENCE [LARGE SCALE GENOMIC DNA]</scope>
</reference>
<reference key="6">
    <citation type="submission" date="2005-07" db="EMBL/GenBank/DDBJ databases">
        <authorList>
            <person name="Mural R.J."/>
            <person name="Istrail S."/>
            <person name="Sutton G.G."/>
            <person name="Florea L."/>
            <person name="Halpern A.L."/>
            <person name="Mobarry C.M."/>
            <person name="Lippert R."/>
            <person name="Walenz B."/>
            <person name="Shatkay H."/>
            <person name="Dew I."/>
            <person name="Miller J.R."/>
            <person name="Flanigan M.J."/>
            <person name="Edwards N.J."/>
            <person name="Bolanos R."/>
            <person name="Fasulo D."/>
            <person name="Halldorsson B.V."/>
            <person name="Hannenhalli S."/>
            <person name="Turner R."/>
            <person name="Yooseph S."/>
            <person name="Lu F."/>
            <person name="Nusskern D.R."/>
            <person name="Shue B.C."/>
            <person name="Zheng X.H."/>
            <person name="Zhong F."/>
            <person name="Delcher A.L."/>
            <person name="Huson D.H."/>
            <person name="Kravitz S.A."/>
            <person name="Mouchard L."/>
            <person name="Reinert K."/>
            <person name="Remington K.A."/>
            <person name="Clark A.G."/>
            <person name="Waterman M.S."/>
            <person name="Eichler E.E."/>
            <person name="Adams M.D."/>
            <person name="Hunkapiller M.W."/>
            <person name="Myers E.W."/>
            <person name="Venter J.C."/>
        </authorList>
    </citation>
    <scope>NUCLEOTIDE SEQUENCE [LARGE SCALE GENOMIC DNA]</scope>
</reference>
<reference key="7">
    <citation type="journal article" date="2004" name="Genome Res.">
        <title>The status, quality, and expansion of the NIH full-length cDNA project: the Mammalian Gene Collection (MGC).</title>
        <authorList>
            <consortium name="The MGC Project Team"/>
        </authorList>
    </citation>
    <scope>NUCLEOTIDE SEQUENCE [LARGE SCALE MRNA] (ISOFORM 1)</scope>
    <source>
        <tissue>Skin</tissue>
    </source>
</reference>
<reference key="8">
    <citation type="journal article" date="1994" name="Cell">
        <title>A novel family of putative signal transducers associated with the cytoplasmic domain of the 75 kDa tumor necrosis factor receptor.</title>
        <authorList>
            <person name="Rothe M."/>
            <person name="Wong S.C."/>
            <person name="Henzel W.J."/>
            <person name="Goeddel D.V."/>
        </authorList>
    </citation>
    <scope>INTERACTION WITH TRAF2 AND TNFRSF1B</scope>
</reference>
<reference key="9">
    <citation type="journal article" date="1996" name="Proc. Natl. Acad. Sci. U.S.A.">
        <title>I-TRAF is a novel TRAF-interacting protein that regulates TRAF-mediated signal transduction.</title>
        <authorList>
            <person name="Rothe M."/>
            <person name="Xiong J."/>
            <person name="Shu H.-B."/>
            <person name="Williamson K."/>
            <person name="Goddard A."/>
            <person name="Goeddel D.V."/>
        </authorList>
    </citation>
    <scope>INTERACTION WITH TANK</scope>
</reference>
<reference key="10">
    <citation type="journal article" date="1996" name="J. Exp. Med.">
        <title>T cell receptor-dependent cell death of T cell hybridomas mediated by the CD30 cytoplasmic domain in association with tumor necrosis factor receptor-associated factors.</title>
        <authorList>
            <person name="Lee S.Y."/>
            <person name="Park C.G."/>
            <person name="Choi Y."/>
        </authorList>
    </citation>
    <scope>INTERACTION WITH TNFRSF8</scope>
</reference>
<reference key="11">
    <citation type="journal article" date="1998" name="Biochemistry">
        <title>CD40-tumor necrosis factor receptor-associated factor (TRAF) interactions: regulation of CD40 signaling through multiple TRAF binding sites and TRAF hetero-oligomerization.</title>
        <authorList>
            <person name="Pullen S.S."/>
            <person name="Miller H.G."/>
            <person name="Everdeen D.S."/>
            <person name="Dang T.T."/>
            <person name="Crute J.J."/>
            <person name="Kehry M.R."/>
        </authorList>
    </citation>
    <scope>INTERACTION WITH TNFRSF5</scope>
</reference>
<reference key="12">
    <citation type="journal article" date="1998" name="Curr. Biol.">
        <title>Identification of CARDIAK, a RIP-like kinase that associates with caspase-1.</title>
        <authorList>
            <person name="Thome M."/>
            <person name="Hofmann K."/>
            <person name="Burns K."/>
            <person name="Martinon F."/>
            <person name="Bodmer J.-L."/>
            <person name="Mattmann C."/>
            <person name="Tschopp J."/>
        </authorList>
    </citation>
    <scope>INTERACTION WITH RIPK2</scope>
</reference>
<reference key="13">
    <citation type="journal article" date="1998" name="J. Biol. Chem.">
        <title>RIP2 is a novel NF-kappaB-activating and cell death-inducing kinase.</title>
        <authorList>
            <person name="McCarthy J.V."/>
            <person name="Ni J."/>
            <person name="Dixit V.M."/>
        </authorList>
    </citation>
    <scope>INTERACTION WITH RIPK2</scope>
</reference>
<reference key="14">
    <citation type="journal article" date="1998" name="J. Biol. Chem.">
        <title>The TRAF family of signal transducers mediates NF-kappaB activation by the TRANCE receptor.</title>
        <authorList>
            <person name="Wong B.R."/>
            <person name="Josien R."/>
            <person name="Lee S.Y."/>
            <person name="Vologodskaia M."/>
            <person name="Steinman R.M."/>
            <person name="Choi Y."/>
        </authorList>
    </citation>
    <scope>INTERACTION WITH TNFRSF11A</scope>
</reference>
<reference key="15">
    <citation type="journal article" date="1998" name="J. Exp. Med.">
        <title>CD28-independent, TRAF2-dependent costimulation of resting T cells by 4-1BB ligand.</title>
        <authorList>
            <person name="Saoulli K."/>
            <person name="Lee S.Y."/>
            <person name="Cannons J.L."/>
            <person name="Yeh W.C."/>
            <person name="Santana A."/>
            <person name="Goldstein M.D."/>
            <person name="Bangia N."/>
            <person name="DeBenedette M.A."/>
            <person name="Mak T.W."/>
            <person name="Choi Y."/>
            <person name="Watts T.H."/>
        </authorList>
    </citation>
    <scope>INTERACTION WITH TNFRSF9</scope>
</reference>
<reference key="16">
    <citation type="journal article" date="1998" name="Mol. Cell. Biol.">
        <title>4-1BB and Ox40 are members of a tumor necrosis factor (TNF)-nerve growth factor receptor subfamily that bind TNF receptor-associated factors and activate nuclear factor kappaB.</title>
        <authorList>
            <person name="Arch R.H."/>
            <person name="Thompson C.B."/>
        </authorList>
    </citation>
    <scope>INTERACTION WITH TNFRSF4 AND TNFRSF9</scope>
</reference>
<reference key="17">
    <citation type="journal article" date="1999" name="J. Biol. Chem.">
        <title>Identification of a novel activation-inducible protein of the tumor necrosis factor receptor superfamily and its ligand.</title>
        <authorList>
            <person name="Kwon B."/>
            <person name="Yu K.-Y."/>
            <person name="Ni J."/>
            <person name="Yu G.-L."/>
            <person name="Jang I.-K."/>
            <person name="Kim Y.-J."/>
            <person name="Xing L."/>
            <person name="Liu D."/>
            <person name="Wang S.-X."/>
            <person name="Kwon B.S."/>
        </authorList>
    </citation>
    <scope>INTERACTION WITH TNFRSF18</scope>
</reference>
<reference key="18">
    <citation type="journal article" date="2000" name="FEBS Lett.">
        <title>Caspase-induced inactivation of the anti-apoptotic TRAF1 during Fas ligand-mediated apoptosis.</title>
        <authorList>
            <person name="Irmler M."/>
            <person name="Steiner V."/>
            <person name="Ruegg C."/>
            <person name="Wajant H."/>
            <person name="Tschopp J."/>
        </authorList>
    </citation>
    <scope>FUNCTION</scope>
    <scope>CLEAVAGE BY CASP8</scope>
    <scope>MUTAGENESIS OF ASP-163</scope>
    <scope>DOMAIN</scope>
</reference>
<reference key="19">
    <citation type="journal article" date="2000" name="J. Biol. Chem.">
        <title>TAJ, a novel member of the tumor necrosis factor receptor family, activates the c-Jun N-terminal kinase pathway and mediates caspase-independent cell death.</title>
        <authorList>
            <person name="Eby M.T."/>
            <person name="Jasmin A."/>
            <person name="Kumar A."/>
            <person name="Sharma K."/>
            <person name="Chaudhary P.M."/>
        </authorList>
    </citation>
    <scope>INTERACTION WITH TNFRSF19</scope>
</reference>
<reference key="20">
    <citation type="journal article" date="2000" name="J. Immunol.">
        <title>TNF receptor family member BCMA (B cell maturation) associates with TNF receptor-associated factor (TRAF) 1, TRAF2, and TRAF3 and activates NF-kappa B, elk-1, c-Jun N-terminal kinase, and p38 mitogen-activated protein kinase.</title>
        <authorList>
            <person name="Hatzoglou A."/>
            <person name="Roussel J."/>
            <person name="Bourgeade M.-F."/>
            <person name="Rogier E."/>
            <person name="Madry C."/>
            <person name="Inoue J."/>
            <person name="Devergne O."/>
            <person name="Tsapis A."/>
        </authorList>
    </citation>
    <scope>INTERACTION WITH TNFRSF17</scope>
</reference>
<reference key="21">
    <citation type="journal article" date="2001" name="Blood">
        <title>RELT, a new member of the tumor necrosis factor receptor superfamily, is selectively expressed in hematopoietic tissues and activates transcription factor NF-kappaB.</title>
        <authorList>
            <person name="Sica G.L."/>
            <person name="Zhu G."/>
            <person name="Tamada K."/>
            <person name="Liu D."/>
            <person name="Ni J."/>
            <person name="Chen L."/>
        </authorList>
    </citation>
    <scope>INTERACTION WITH TNFRSF19L</scope>
</reference>
<reference key="22">
    <citation type="journal article" date="2001" name="J. Biol. Chem.">
        <title>The ectodermal dysplasia receptor activates the nuclear factor-kappaB, JNK, and cell death pathways and binds to ectodysplasin A.</title>
        <authorList>
            <person name="Kumar A."/>
            <person name="Eby M.T."/>
            <person name="Sinha S."/>
            <person name="Jasmin A."/>
            <person name="Chaudhary P.M."/>
        </authorList>
    </citation>
    <scope>INTERACTION WITH EDAR</scope>
</reference>
<reference key="23">
    <citation type="journal article" date="2002" name="Nature">
        <title>TNF-RII and c-IAP1 mediate ubiquitination and degradation of TRAF2.</title>
        <authorList>
            <person name="Li X."/>
            <person name="Yang Y."/>
            <person name="Ashwell J.D."/>
        </authorList>
    </citation>
    <scope>INTERACTION WITH BIRC2</scope>
</reference>
<reference key="24">
    <citation type="journal article" date="2004" name="J. Biol. Chem.">
        <title>TRAF3 forms heterotrimers with TRAF2 and modulates its ability to mediate NF-{kappa}B activation.</title>
        <authorList>
            <person name="He L."/>
            <person name="Grammer A.C."/>
            <person name="Wu X."/>
            <person name="Lipsky P.E."/>
        </authorList>
    </citation>
    <scope>SUBCELLULAR LOCATION</scope>
    <scope>SUBUNIT</scope>
</reference>
<reference key="25">
    <citation type="journal article" date="2004" name="Proteomics">
        <title>Mass spectrometric analysis of tumor necrosis factor receptor-associated factor 1 ubiquitination mediated by cellular inhibitor of apoptosis 2.</title>
        <authorList>
            <person name="Lee J.S."/>
            <person name="Hong U.S."/>
            <person name="Lee T.H."/>
            <person name="Yoon S.K."/>
            <person name="Yoon J.B."/>
        </authorList>
    </citation>
    <scope>UBIQUITINATION AT LYS-185 AND LYS-193</scope>
    <scope>IDENTIFICATION BY MASS SPECTROMETRY</scope>
    <scope>MUTAGENESIS OF LYS-185 AND LYS-193</scope>
</reference>
<reference key="26">
    <citation type="journal article" date="2006" name="Eur. J. Immunol.">
        <title>TNF receptor-associated factor-1 (TRAF1) negatively regulates Toll/IL-1 receptor domain-containing adaptor inducing IFN-beta (TRIF)-mediated signaling.</title>
        <authorList>
            <person name="Su X."/>
            <person name="Li S."/>
            <person name="Meng M."/>
            <person name="Qian W."/>
            <person name="Xie W."/>
            <person name="Chen D."/>
            <person name="Zhai Z."/>
            <person name="Shu H.B."/>
        </authorList>
    </citation>
    <scope>FUNCTION</scope>
    <scope>INTERACTION WITH TICAM1</scope>
    <scope>CLEAVAGE BY CASP8</scope>
    <scope>MUTAGENESIS OF ASP-163</scope>
</reference>
<reference key="27">
    <citation type="journal article" date="2008" name="Genes Cells">
        <title>Negative regulation of constitutive NF-kappaB and JNK signaling by PKN1-mediated phosphorylation of TRAF1.</title>
        <authorList>
            <person name="Kato T. Jr."/>
            <person name="Gotoh Y."/>
            <person name="Hoffmann A."/>
            <person name="Ono Y."/>
        </authorList>
    </citation>
    <scope>FUNCTION</scope>
    <scope>PHOSPHORYLATION</scope>
</reference>
<reference key="28">
    <citation type="journal article" date="2009" name="Mol. Immunol.">
        <title>TNF receptor-associated factor 1 is a positive regulator of the NF-kappaB alternative pathway.</title>
        <authorList>
            <person name="Lavorgna A."/>
            <person name="De Filippi R."/>
            <person name="Formisano S."/>
            <person name="Leonardi A."/>
        </authorList>
    </citation>
    <scope>FUNCTION</scope>
    <scope>INTERACTION WITH TNFRSF13C</scope>
</reference>
<reference key="29">
    <citation type="journal article" date="2009" name="Oncogene">
        <title>Tumor necrosis factor receptor-associated factor-1 enhances proinflammatory TNF receptor-2 signaling and modifies TNFR1-TNFR2 cooperation.</title>
        <authorList>
            <person name="Wicovsky A."/>
            <person name="Henkler F."/>
            <person name="Salzmann S."/>
            <person name="Scheurich P."/>
            <person name="Kneitz C."/>
            <person name="Wajant H."/>
        </authorList>
    </citation>
    <scope>FUNCTION</scope>
    <scope>INTERACTION WITH TNFRSF1A; TNFRSF1B AND TRAF2</scope>
</reference>
<reference key="30">
    <citation type="journal article" date="2010" name="J. Mol. Biol.">
        <title>Asymmetric recruitment of cIAPs by TRAF2.</title>
        <authorList>
            <person name="Mace P.D."/>
            <person name="Smits C."/>
            <person name="Vaux D.L."/>
            <person name="Silke J."/>
            <person name="Day C.L."/>
        </authorList>
    </citation>
    <scope>INTERACTION WITH BIRC2</scope>
</reference>
<reference key="31">
    <citation type="journal article" date="2010" name="Mol. Cell. Biochem.">
        <title>Ubiquitin ligase Smurf1 targets TRAF family proteins for ubiquitination and degradation.</title>
        <authorList>
            <person name="Li S."/>
            <person name="Lu K."/>
            <person name="Wang J."/>
            <person name="An L."/>
            <person name="Yang G."/>
            <person name="Chen H."/>
            <person name="Cui Y."/>
            <person name="Yin X."/>
            <person name="Xie P."/>
            <person name="Xing G."/>
            <person name="He F."/>
            <person name="Zhang L."/>
        </authorList>
    </citation>
    <scope>UBIQUITINATION</scope>
</reference>
<reference key="32">
    <citation type="journal article" date="2010" name="Mol. Cell">
        <title>Crystal structures of the TRAF2: cIAP2 and the TRAF1: TRAF2: cIAP2 complexes: affinity, specificity, and regulation.</title>
        <authorList>
            <person name="Zheng C."/>
            <person name="Kabaleeswaran V."/>
            <person name="Wang Y."/>
            <person name="Cheng G."/>
            <person name="Wu H."/>
        </authorList>
    </citation>
    <scope>X-RAY CRYSTALLOGRAPHY (2.8 ANGSTROMS) OF 181-244 IN COMPLEX WITH TRAF2 AND BIRC3</scope>
    <scope>SUBUNIT</scope>
    <scope>FUNCTION</scope>
</reference>
<reference key="33">
    <citation type="journal article" date="2008" name="Nature">
        <title>DNA sequencing of a cytogenetically normal acute myeloid leukaemia genome.</title>
        <authorList>
            <person name="Ley T.J."/>
            <person name="Mardis E.R."/>
            <person name="Ding L."/>
            <person name="Fulton B."/>
            <person name="McLellan M.D."/>
            <person name="Chen K."/>
            <person name="Dooling D."/>
            <person name="Dunford-Shore B.H."/>
            <person name="McGrath S."/>
            <person name="Hickenbotham M."/>
            <person name="Cook L."/>
            <person name="Abbott R."/>
            <person name="Larson D.E."/>
            <person name="Koboldt D.C."/>
            <person name="Pohl C."/>
            <person name="Smith S."/>
            <person name="Hawkins A."/>
            <person name="Abbott S."/>
            <person name="Locke D."/>
            <person name="Hillier L.W."/>
            <person name="Miner T."/>
            <person name="Fulton L."/>
            <person name="Magrini V."/>
            <person name="Wylie T."/>
            <person name="Glasscock J."/>
            <person name="Conyers J."/>
            <person name="Sander N."/>
            <person name="Shi X."/>
            <person name="Osborne J.R."/>
            <person name="Minx P."/>
            <person name="Gordon D."/>
            <person name="Chinwalla A."/>
            <person name="Zhao Y."/>
            <person name="Ries R.E."/>
            <person name="Payton J.E."/>
            <person name="Westervelt P."/>
            <person name="Tomasson M.H."/>
            <person name="Watson M."/>
            <person name="Baty J."/>
            <person name="Ivanovich J."/>
            <person name="Heath S."/>
            <person name="Shannon W.D."/>
            <person name="Nagarajan R."/>
            <person name="Walter M.J."/>
            <person name="Link D.C."/>
            <person name="Graubert T.A."/>
            <person name="DiPersio J.F."/>
            <person name="Wilson R.K."/>
        </authorList>
    </citation>
    <scope>VARIANT [LARGE SCALE ANALYSIS] THR-139</scope>
</reference>